<proteinExistence type="evidence at protein level"/>
<gene>
    <name type="primary">CYSRT1</name>
    <name type="synonym">C9orf169</name>
</gene>
<organism>
    <name type="scientific">Homo sapiens</name>
    <name type="common">Human</name>
    <dbReference type="NCBI Taxonomy" id="9606"/>
    <lineage>
        <taxon>Eukaryota</taxon>
        <taxon>Metazoa</taxon>
        <taxon>Chordata</taxon>
        <taxon>Craniata</taxon>
        <taxon>Vertebrata</taxon>
        <taxon>Euteleostomi</taxon>
        <taxon>Mammalia</taxon>
        <taxon>Eutheria</taxon>
        <taxon>Euarchontoglires</taxon>
        <taxon>Primates</taxon>
        <taxon>Haplorrhini</taxon>
        <taxon>Catarrhini</taxon>
        <taxon>Hominidae</taxon>
        <taxon>Homo</taxon>
    </lineage>
</organism>
<reference key="1">
    <citation type="journal article" date="2004" name="Nature">
        <title>DNA sequence and analysis of human chromosome 9.</title>
        <authorList>
            <person name="Humphray S.J."/>
            <person name="Oliver K."/>
            <person name="Hunt A.R."/>
            <person name="Plumb R.W."/>
            <person name="Loveland J.E."/>
            <person name="Howe K.L."/>
            <person name="Andrews T.D."/>
            <person name="Searle S."/>
            <person name="Hunt S.E."/>
            <person name="Scott C.E."/>
            <person name="Jones M.C."/>
            <person name="Ainscough R."/>
            <person name="Almeida J.P."/>
            <person name="Ambrose K.D."/>
            <person name="Ashwell R.I.S."/>
            <person name="Babbage A.K."/>
            <person name="Babbage S."/>
            <person name="Bagguley C.L."/>
            <person name="Bailey J."/>
            <person name="Banerjee R."/>
            <person name="Barker D.J."/>
            <person name="Barlow K.F."/>
            <person name="Bates K."/>
            <person name="Beasley H."/>
            <person name="Beasley O."/>
            <person name="Bird C.P."/>
            <person name="Bray-Allen S."/>
            <person name="Brown A.J."/>
            <person name="Brown J.Y."/>
            <person name="Burford D."/>
            <person name="Burrill W."/>
            <person name="Burton J."/>
            <person name="Carder C."/>
            <person name="Carter N.P."/>
            <person name="Chapman J.C."/>
            <person name="Chen Y."/>
            <person name="Clarke G."/>
            <person name="Clark S.Y."/>
            <person name="Clee C.M."/>
            <person name="Clegg S."/>
            <person name="Collier R.E."/>
            <person name="Corby N."/>
            <person name="Crosier M."/>
            <person name="Cummings A.T."/>
            <person name="Davies J."/>
            <person name="Dhami P."/>
            <person name="Dunn M."/>
            <person name="Dutta I."/>
            <person name="Dyer L.W."/>
            <person name="Earthrowl M.E."/>
            <person name="Faulkner L."/>
            <person name="Fleming C.J."/>
            <person name="Frankish A."/>
            <person name="Frankland J.A."/>
            <person name="French L."/>
            <person name="Fricker D.G."/>
            <person name="Garner P."/>
            <person name="Garnett J."/>
            <person name="Ghori J."/>
            <person name="Gilbert J.G.R."/>
            <person name="Glison C."/>
            <person name="Grafham D.V."/>
            <person name="Gribble S."/>
            <person name="Griffiths C."/>
            <person name="Griffiths-Jones S."/>
            <person name="Grocock R."/>
            <person name="Guy J."/>
            <person name="Hall R.E."/>
            <person name="Hammond S."/>
            <person name="Harley J.L."/>
            <person name="Harrison E.S.I."/>
            <person name="Hart E.A."/>
            <person name="Heath P.D."/>
            <person name="Henderson C.D."/>
            <person name="Hopkins B.L."/>
            <person name="Howard P.J."/>
            <person name="Howden P.J."/>
            <person name="Huckle E."/>
            <person name="Johnson C."/>
            <person name="Johnson D."/>
            <person name="Joy A.A."/>
            <person name="Kay M."/>
            <person name="Keenan S."/>
            <person name="Kershaw J.K."/>
            <person name="Kimberley A.M."/>
            <person name="King A."/>
            <person name="Knights A."/>
            <person name="Laird G.K."/>
            <person name="Langford C."/>
            <person name="Lawlor S."/>
            <person name="Leongamornlert D.A."/>
            <person name="Leversha M."/>
            <person name="Lloyd C."/>
            <person name="Lloyd D.M."/>
            <person name="Lovell J."/>
            <person name="Martin S."/>
            <person name="Mashreghi-Mohammadi M."/>
            <person name="Matthews L."/>
            <person name="McLaren S."/>
            <person name="McLay K.E."/>
            <person name="McMurray A."/>
            <person name="Milne S."/>
            <person name="Nickerson T."/>
            <person name="Nisbett J."/>
            <person name="Nordsiek G."/>
            <person name="Pearce A.V."/>
            <person name="Peck A.I."/>
            <person name="Porter K.M."/>
            <person name="Pandian R."/>
            <person name="Pelan S."/>
            <person name="Phillimore B."/>
            <person name="Povey S."/>
            <person name="Ramsey Y."/>
            <person name="Rand V."/>
            <person name="Scharfe M."/>
            <person name="Sehra H.K."/>
            <person name="Shownkeen R."/>
            <person name="Sims S.K."/>
            <person name="Skuce C.D."/>
            <person name="Smith M."/>
            <person name="Steward C.A."/>
            <person name="Swarbreck D."/>
            <person name="Sycamore N."/>
            <person name="Tester J."/>
            <person name="Thorpe A."/>
            <person name="Tracey A."/>
            <person name="Tromans A."/>
            <person name="Thomas D.W."/>
            <person name="Wall M."/>
            <person name="Wallis J.M."/>
            <person name="West A.P."/>
            <person name="Whitehead S.L."/>
            <person name="Willey D.L."/>
            <person name="Williams S.A."/>
            <person name="Wilming L."/>
            <person name="Wray P.W."/>
            <person name="Young L."/>
            <person name="Ashurst J.L."/>
            <person name="Coulson A."/>
            <person name="Blocker H."/>
            <person name="Durbin R.M."/>
            <person name="Sulston J.E."/>
            <person name="Hubbard T."/>
            <person name="Jackson M.J."/>
            <person name="Bentley D.R."/>
            <person name="Beck S."/>
            <person name="Rogers J."/>
            <person name="Dunham I."/>
        </authorList>
    </citation>
    <scope>NUCLEOTIDE SEQUENCE [LARGE SCALE GENOMIC DNA]</scope>
</reference>
<reference key="2">
    <citation type="journal article" date="2004" name="Genome Res.">
        <title>The status, quality, and expansion of the NIH full-length cDNA project: the Mammalian Gene Collection (MGC).</title>
        <authorList>
            <consortium name="The MGC Project Team"/>
        </authorList>
    </citation>
    <scope>NUCLEOTIDE SEQUENCE [LARGE SCALE MRNA]</scope>
    <source>
        <tissue>Liver</tissue>
    </source>
</reference>
<reference key="3">
    <citation type="journal article" date="2006" name="Cell">
        <title>Global, in vivo, and site-specific phosphorylation dynamics in signaling networks.</title>
        <authorList>
            <person name="Olsen J.V."/>
            <person name="Blagoev B."/>
            <person name="Gnad F."/>
            <person name="Macek B."/>
            <person name="Kumar C."/>
            <person name="Mortensen P."/>
            <person name="Mann M."/>
        </authorList>
    </citation>
    <scope>IDENTIFICATION BY MASS SPECTROMETRY [LARGE SCALE ANALYSIS]</scope>
    <source>
        <tissue>Cervix carcinoma</tissue>
    </source>
</reference>
<reference key="4">
    <citation type="journal article" date="2023" name="J. Invest. Dermatol.">
        <title>CYSRT1: An Antimicrobial Epidermal Protein that Can Interact with Late Cornified Envelope Proteins.</title>
        <authorList>
            <person name="Niehues H."/>
            <person name="Rikken G."/>
            <person name="Kersten F.F.J."/>
            <person name="Eeftens J.M."/>
            <person name="van Vlijmen-Willems I.M.J.J."/>
            <person name="Rodijk-Olthuis D."/>
            <person name="Jansen P.A.M."/>
            <person name="Hendriks W.J.A.J."/>
            <person name="Ederveen T.H.A."/>
            <person name="Schalkwijk J."/>
            <person name="van den Bogaard E.H."/>
            <person name="Zeeuwen P.L.J.M."/>
        </authorList>
    </citation>
    <scope>FUNCTION</scope>
    <scope>INTERACTION WITH LCE1B; LCE2C; LCE3A; LCE3C; LCE4A; LCE5A; LCE1C; LCE1D; LCE1E; LCE2A; LCE3D; LCE3E AND LCE1A</scope>
    <scope>SUBCELLULAR LOCATION</scope>
    <scope>TISSUE SPECIFICITY</scope>
</reference>
<name>CRTP1_HUMAN</name>
<comment type="function">
    <text evidence="2">Component of the stratum corneum that may contribute to epidermal antimicrobial host defenses.</text>
</comment>
<comment type="subunit">
    <text evidence="2">Interacts with LCE1B; the interaction is direct (PubMed:36804407). Interacts with LCE2C; the interaction is direct (PubMed:36804407). Interacts with LCE3A; the interaction is direct (PubMed:36804407). Interacts with LCE3C; the interaction is direct (PubMed:36804407). Interacts with LCE4A; the interaction is direct (PubMed:36804407). Interacts with LCE5A; the interaction is direct (PubMed:36804407). Interacts with LCE1C (PubMed:36804407). Interacts with LCE1D (PubMed:36804407). Interacts with LCE1E (PubMed:36804407). Interacts with LCE2A (PubMed:36804407). Interacts with LCE3D (PubMed:36804407). Interacts with LCE3E (PubMed:36804407). Interacts with LCE1A (PubMed:36804407).</text>
</comment>
<comment type="interaction">
    <interactant intactId="EBI-3867333">
        <id>A8MQ03</id>
    </interactant>
    <interactant intactId="EBI-2809489">
        <id>Q9NQ94</id>
        <label>A1CF</label>
    </interactant>
    <organismsDiffer>false</organismsDiffer>
    <experiments>3</experiments>
</comment>
<comment type="interaction">
    <interactant intactId="EBI-3867333">
        <id>A8MQ03</id>
    </interactant>
    <interactant intactId="EBI-11976299">
        <id>Q5BKX5-3</id>
        <label>ACTMAP</label>
    </interactant>
    <organismsDiffer>false</organismsDiffer>
    <experiments>3</experiments>
</comment>
<comment type="interaction">
    <interactant intactId="EBI-3867333">
        <id>A8MQ03</id>
    </interactant>
    <interactant intactId="EBI-3916242">
        <id>Q96HD9</id>
        <label>ACY3</label>
    </interactant>
    <organismsDiffer>false</organismsDiffer>
    <experiments>3</experiments>
</comment>
<comment type="interaction">
    <interactant intactId="EBI-3867333">
        <id>A8MQ03</id>
    </interactant>
    <interactant intactId="EBI-12006944">
        <id>O43184-4</id>
        <label>ADAM12</label>
    </interactant>
    <organismsDiffer>false</organismsDiffer>
    <experiments>6</experiments>
</comment>
<comment type="interaction">
    <interactant intactId="EBI-3867333">
        <id>A8MQ03</id>
    </interactant>
    <interactant intactId="EBI-10221726">
        <id>P82987</id>
        <label>ADAMTSL3</label>
    </interactant>
    <organismsDiffer>false</organismsDiffer>
    <experiments>3</experiments>
</comment>
<comment type="interaction">
    <interactant intactId="EBI-3867333">
        <id>A8MQ03</id>
    </interactant>
    <interactant intactId="EBI-10173507">
        <id>Q6UY14-3</id>
        <label>ADAMTSL4</label>
    </interactant>
    <organismsDiffer>false</organismsDiffer>
    <experiments>3</experiments>
</comment>
<comment type="interaction">
    <interactant intactId="EBI-3867333">
        <id>A8MQ03</id>
    </interactant>
    <interactant intactId="EBI-9075891">
        <id>Q6ZMM2</id>
        <label>ADAMTSL5</label>
    </interactant>
    <organismsDiffer>false</organismsDiffer>
    <experiments>3</experiments>
</comment>
<comment type="interaction">
    <interactant intactId="EBI-3867333">
        <id>A8MQ03</id>
    </interactant>
    <interactant intactId="EBI-727098">
        <id>P21549</id>
        <label>AGXT</label>
    </interactant>
    <organismsDiffer>false</organismsDiffer>
    <experiments>3</experiments>
</comment>
<comment type="interaction">
    <interactant intactId="EBI-3867333">
        <id>A8MQ03</id>
    </interactant>
    <interactant intactId="EBI-2558314">
        <id>P43353</id>
        <label>ALDH3B1</label>
    </interactant>
    <organismsDiffer>false</organismsDiffer>
    <experiments>3</experiments>
</comment>
<comment type="interaction">
    <interactant intactId="EBI-3867333">
        <id>A8MQ03</id>
    </interactant>
    <interactant intactId="EBI-1211484">
        <id>P05187</id>
        <label>ALPP</label>
    </interactant>
    <organismsDiffer>false</organismsDiffer>
    <experiments>3</experiments>
</comment>
<comment type="interaction">
    <interactant intactId="EBI-3867333">
        <id>A8MQ03</id>
    </interactant>
    <interactant intactId="EBI-12823597">
        <id>Q9Y4X0-3</id>
        <label>AMMECR1</label>
    </interactant>
    <organismsDiffer>false</organismsDiffer>
    <experiments>3</experiments>
</comment>
<comment type="interaction">
    <interactant intactId="EBI-3867333">
        <id>A8MQ03</id>
    </interactant>
    <interactant intactId="EBI-12224467">
        <id>Q9NYG5-2</id>
        <label>ANAPC11</label>
    </interactant>
    <organismsDiffer>false</organismsDiffer>
    <experiments>3</experiments>
</comment>
<comment type="interaction">
    <interactant intactId="EBI-3867333">
        <id>A8MQ03</id>
    </interactant>
    <interactant intactId="EBI-11954519">
        <id>Q49AR9</id>
        <label>ANKS1A</label>
    </interactant>
    <organismsDiffer>false</organismsDiffer>
    <experiments>3</experiments>
</comment>
<comment type="interaction">
    <interactant intactId="EBI-3867333">
        <id>A8MQ03</id>
    </interactant>
    <interactant intactId="EBI-745213">
        <id>P29972</id>
        <label>AQP1</label>
    </interactant>
    <organismsDiffer>false</organismsDiffer>
    <experiments>3</experiments>
</comment>
<comment type="interaction">
    <interactant intactId="EBI-3867333">
        <id>A8MQ03</id>
    </interactant>
    <interactant intactId="EBI-953674">
        <id>P15514</id>
        <label>AREG</label>
    </interactant>
    <organismsDiffer>false</organismsDiffer>
    <experiments>3</experiments>
</comment>
<comment type="interaction">
    <interactant intactId="EBI-3867333">
        <id>A8MQ03</id>
    </interactant>
    <interactant intactId="EBI-750254">
        <id>Q9BRR9</id>
        <label>ARHGAP9</label>
    </interactant>
    <organismsDiffer>false</organismsDiffer>
    <experiments>3</experiments>
</comment>
<comment type="interaction">
    <interactant intactId="EBI-3867333">
        <id>A8MQ03</id>
    </interactant>
    <interactant intactId="EBI-948603">
        <id>Q03989</id>
        <label>ARID5A</label>
    </interactant>
    <organismsDiffer>false</organismsDiffer>
    <experiments>3</experiments>
</comment>
<comment type="interaction">
    <interactant intactId="EBI-3867333">
        <id>A8MQ03</id>
    </interactant>
    <interactant intactId="EBI-11998350">
        <id>Q6HA08</id>
        <label>ASTL</label>
    </interactant>
    <organismsDiffer>false</organismsDiffer>
    <experiments>3</experiments>
</comment>
<comment type="interaction">
    <interactant intactId="EBI-3867333">
        <id>A8MQ03</id>
    </interactant>
    <interactant intactId="EBI-12006308">
        <id>Q7Z3C6-3</id>
        <label>ATG9A</label>
    </interactant>
    <organismsDiffer>false</organismsDiffer>
    <experiments>3</experiments>
</comment>
<comment type="interaction">
    <interactant intactId="EBI-3867333">
        <id>A8MQ03</id>
    </interactant>
    <interactant intactId="EBI-745689">
        <id>Q7L5A3</id>
        <label>ATOSB</label>
    </interactant>
    <organismsDiffer>false</organismsDiffer>
    <experiments>3</experiments>
</comment>
<comment type="interaction">
    <interactant intactId="EBI-3867333">
        <id>A8MQ03</id>
    </interactant>
    <interactant intactId="EBI-1166928">
        <id>Q8N5M1</id>
        <label>ATPAF2</label>
    </interactant>
    <organismsDiffer>false</organismsDiffer>
    <experiments>3</experiments>
</comment>
<comment type="interaction">
    <interactant intactId="EBI-3867333">
        <id>A8MQ03</id>
    </interactant>
    <interactant intactId="EBI-12140769">
        <id>Q8WXX7-2</id>
        <label>AUTS2</label>
    </interactant>
    <organismsDiffer>false</organismsDiffer>
    <experiments>3</experiments>
</comment>
<comment type="interaction">
    <interactant intactId="EBI-3867333">
        <id>A8MQ03</id>
    </interactant>
    <interactant intactId="EBI-8640233">
        <id>Q5T686</id>
        <label>AVPI1</label>
    </interactant>
    <organismsDiffer>false</organismsDiffer>
    <experiments>3</experiments>
</comment>
<comment type="interaction">
    <interactant intactId="EBI-3867333">
        <id>A8MQ03</id>
    </interactant>
    <interactant intactId="EBI-10319970">
        <id>Q9UBV7</id>
        <label>B4GALT7</label>
    </interactant>
    <organismsDiffer>false</organismsDiffer>
    <experiments>3</experiments>
</comment>
<comment type="interaction">
    <interactant intactId="EBI-3867333">
        <id>A8MQ03</id>
    </interactant>
    <interactant intactId="EBI-747185">
        <id>O95817</id>
        <label>BAG3</label>
    </interactant>
    <organismsDiffer>false</organismsDiffer>
    <experiments>3</experiments>
</comment>
<comment type="interaction">
    <interactant intactId="EBI-3867333">
        <id>A8MQ03</id>
    </interactant>
    <interactant intactId="EBI-10988864">
        <id>P46379-2</id>
        <label>BAG6</label>
    </interactant>
    <organismsDiffer>false</organismsDiffer>
    <experiments>3</experiments>
</comment>
<comment type="interaction">
    <interactant intactId="EBI-3867333">
        <id>A8MQ03</id>
    </interactant>
    <interactant intactId="EBI-742750">
        <id>Q8TBE0</id>
        <label>BAHD1</label>
    </interactant>
    <organismsDiffer>false</organismsDiffer>
    <experiments>3</experiments>
</comment>
<comment type="interaction">
    <interactant intactId="EBI-3867333">
        <id>A8MQ03</id>
    </interactant>
    <interactant intactId="EBI-2483278">
        <id>Q9UHR4</id>
        <label>BAIAP2L1</label>
    </interactant>
    <organismsDiffer>false</organismsDiffer>
    <experiments>3</experiments>
</comment>
<comment type="interaction">
    <interactant intactId="EBI-3867333">
        <id>A8MQ03</id>
    </interactant>
    <interactant intactId="EBI-7162175">
        <id>Q9HBH7</id>
        <label>BEX1</label>
    </interactant>
    <organismsDiffer>false</organismsDiffer>
    <experiments>3</experiments>
</comment>
<comment type="interaction">
    <interactant intactId="EBI-3867333">
        <id>A8MQ03</id>
    </interactant>
    <interactant intactId="EBI-745073">
        <id>Q9BXY8</id>
        <label>BEX2</label>
    </interactant>
    <organismsDiffer>false</organismsDiffer>
    <experiments>3</experiments>
</comment>
<comment type="interaction">
    <interactant intactId="EBI-3867333">
        <id>A8MQ03</id>
    </interactant>
    <interactant intactId="EBI-3895726">
        <id>P62952</id>
        <label>BLCAP</label>
    </interactant>
    <organismsDiffer>false</organismsDiffer>
    <experiments>3</experiments>
</comment>
<comment type="interaction">
    <interactant intactId="EBI-3867333">
        <id>A8MQ03</id>
    </interactant>
    <interactant intactId="EBI-1035195">
        <id>P18075</id>
        <label>BMP7</label>
    </interactant>
    <organismsDiffer>false</organismsDiffer>
    <experiments>3</experiments>
</comment>
<comment type="interaction">
    <interactant intactId="EBI-3867333">
        <id>A8MQ03</id>
    </interactant>
    <interactant intactId="EBI-12040255">
        <id>Q0VDD7-2</id>
        <label>BRME1</label>
    </interactant>
    <organismsDiffer>false</organismsDiffer>
    <experiments>3</experiments>
</comment>
<comment type="interaction">
    <interactant intactId="EBI-3867333">
        <id>A8MQ03</id>
    </interactant>
    <interactant intactId="EBI-11532900">
        <id>J3KQ12</id>
        <label>BSCL2</label>
    </interactant>
    <organismsDiffer>false</organismsDiffer>
    <experiments>3</experiments>
</comment>
<comment type="interaction">
    <interactant intactId="EBI-3867333">
        <id>A8MQ03</id>
    </interactant>
    <interactant intactId="EBI-6660291">
        <id>Q6NUJ2</id>
        <label>C11orf87</label>
    </interactant>
    <organismsDiffer>false</organismsDiffer>
    <experiments>3</experiments>
</comment>
<comment type="interaction">
    <interactant intactId="EBI-3867333">
        <id>A8MQ03</id>
    </interactant>
    <interactant intactId="EBI-7317823">
        <id>Q6P5X5</id>
        <label>C22orf39</label>
    </interactant>
    <organismsDiffer>false</organismsDiffer>
    <experiments>6</experiments>
</comment>
<comment type="interaction">
    <interactant intactId="EBI-3867333">
        <id>A8MQ03</id>
    </interactant>
    <interactant intactId="EBI-5329490">
        <id>Q13698</id>
        <label>CACNA1S</label>
    </interactant>
    <organismsDiffer>false</organismsDiffer>
    <experiments>3</experiments>
</comment>
<comment type="interaction">
    <interactant intactId="EBI-3867333">
        <id>A8MQ03</id>
    </interactant>
    <interactant intactId="EBI-3866279">
        <id>Q9BWT7</id>
        <label>CARD10</label>
    </interactant>
    <organismsDiffer>false</organismsDiffer>
    <experiments>3</experiments>
</comment>
<comment type="interaction">
    <interactant intactId="EBI-3867333">
        <id>A8MQ03</id>
    </interactant>
    <interactant intactId="EBI-11530605">
        <id>Q9H257-2</id>
        <label>CARD9</label>
    </interactant>
    <organismsDiffer>false</organismsDiffer>
    <experiments>3</experiments>
</comment>
<comment type="interaction">
    <interactant intactId="EBI-3867333">
        <id>A8MQ03</id>
    </interactant>
    <interactant intactId="EBI-718719">
        <id>Q9Y2V2</id>
        <label>CARHSP1</label>
    </interactant>
    <organismsDiffer>false</organismsDiffer>
    <experiments>3</experiments>
</comment>
<comment type="interaction">
    <interactant intactId="EBI-3867333">
        <id>A8MQ03</id>
    </interactant>
    <interactant intactId="EBI-10258233">
        <id>Q7Z7H3</id>
        <label>CATIP</label>
    </interactant>
    <organismsDiffer>false</organismsDiffer>
    <experiments>3</experiments>
</comment>
<comment type="interaction">
    <interactant intactId="EBI-3867333">
        <id>A8MQ03</id>
    </interactant>
    <interactant intactId="EBI-744545">
        <id>Q8NEC5</id>
        <label>CATSPER1</label>
    </interactant>
    <organismsDiffer>false</organismsDiffer>
    <experiments>3</experiments>
</comment>
<comment type="interaction">
    <interactant intactId="EBI-3867333">
        <id>A8MQ03</id>
    </interactant>
    <interactant intactId="EBI-12196065">
        <id>Q8N7E2</id>
        <label>CBLL2</label>
    </interactant>
    <organismsDiffer>false</organismsDiffer>
    <experiments>3</experiments>
</comment>
<comment type="interaction">
    <interactant intactId="EBI-3867333">
        <id>A8MQ03</id>
    </interactant>
    <interactant intactId="EBI-11974585">
        <id>Q14781-2</id>
        <label>CBX2</label>
    </interactant>
    <organismsDiffer>false</organismsDiffer>
    <experiments>3</experiments>
</comment>
<comment type="interaction">
    <interactant intactId="EBI-3867333">
        <id>A8MQ03</id>
    </interactant>
    <interactant intactId="EBI-744556">
        <id>Q96HB5</id>
        <label>CCDC120</label>
    </interactant>
    <organismsDiffer>false</organismsDiffer>
    <experiments>3</experiments>
</comment>
<comment type="interaction">
    <interactant intactId="EBI-3867333">
        <id>A8MQ03</id>
    </interactant>
    <interactant intactId="EBI-746041">
        <id>Q8TC90</id>
        <label>CCER1</label>
    </interactant>
    <organismsDiffer>false</organismsDiffer>
    <experiments>3</experiments>
</comment>
<comment type="interaction">
    <interactant intactId="EBI-3867333">
        <id>A8MQ03</id>
    </interactant>
    <interactant intactId="EBI-12010594">
        <id>O75909-2</id>
        <label>CCNK</label>
    </interactant>
    <organismsDiffer>false</organismsDiffer>
    <experiments>3</experiments>
</comment>
<comment type="interaction">
    <interactant intactId="EBI-3867333">
        <id>A8MQ03</id>
    </interactant>
    <interactant intactId="EBI-10254587">
        <id>Q6UXG3</id>
        <label>CD300LG</label>
    </interactant>
    <organismsDiffer>false</organismsDiffer>
    <experiments>3</experiments>
</comment>
<comment type="interaction">
    <interactant intactId="EBI-3867333">
        <id>A8MQ03</id>
    </interactant>
    <interactant intactId="EBI-3919850">
        <id>Q8IVW4</id>
        <label>CDKL3</label>
    </interactant>
    <organismsDiffer>false</organismsDiffer>
    <experiments>3</experiments>
</comment>
<comment type="interaction">
    <interactant intactId="EBI-3867333">
        <id>A8MQ03</id>
    </interactant>
    <interactant intactId="EBI-12139335">
        <id>Q8N6W0</id>
        <label>CELF5</label>
    </interactant>
    <organismsDiffer>false</organismsDiffer>
    <experiments>3</experiments>
</comment>
<comment type="interaction">
    <interactant intactId="EBI-3867333">
        <id>A8MQ03</id>
    </interactant>
    <interactant intactId="EBI-12261896">
        <id>Q5T4B2</id>
        <label>CERCAM</label>
    </interactant>
    <organismsDiffer>false</organismsDiffer>
    <experiments>3</experiments>
</comment>
<comment type="interaction">
    <interactant intactId="EBI-3867333">
        <id>A8MQ03</id>
    </interactant>
    <interactant intactId="EBI-10274247">
        <id>Q8TCT0</id>
        <label>CERK</label>
    </interactant>
    <organismsDiffer>false</organismsDiffer>
    <experiments>3</experiments>
</comment>
<comment type="interaction">
    <interactant intactId="EBI-3867333">
        <id>A8MQ03</id>
    </interactant>
    <interactant intactId="EBI-12360993">
        <id>P23141-3</id>
        <label>CES1</label>
    </interactant>
    <organismsDiffer>false</organismsDiffer>
    <experiments>3</experiments>
</comment>
<comment type="interaction">
    <interactant intactId="EBI-3867333">
        <id>A8MQ03</id>
    </interactant>
    <interactant intactId="EBI-749051">
        <id>Q8IYR0</id>
        <label>CFAP206</label>
    </interactant>
    <organismsDiffer>false</organismsDiffer>
    <experiments>3</experiments>
</comment>
<comment type="interaction">
    <interactant intactId="EBI-3867333">
        <id>A8MQ03</id>
    </interactant>
    <interactant intactId="EBI-9038570">
        <id>P27918</id>
        <label>CFP</label>
    </interactant>
    <organismsDiffer>false</organismsDiffer>
    <experiments>3</experiments>
</comment>
<comment type="interaction">
    <interactant intactId="EBI-3867333">
        <id>A8MQ03</id>
    </interactant>
    <interactant intactId="EBI-2321769">
        <id>Q9Y6H1</id>
        <label>CHCHD2</label>
    </interactant>
    <organismsDiffer>false</organismsDiffer>
    <experiments>3</experiments>
</comment>
<comment type="interaction">
    <interactant intactId="EBI-3867333">
        <id>A8MQ03</id>
    </interactant>
    <interactant intactId="EBI-743375">
        <id>Q9NX63</id>
        <label>CHCHD3</label>
    </interactant>
    <organismsDiffer>false</organismsDiffer>
    <experiments>6</experiments>
</comment>
<comment type="interaction">
    <interactant intactId="EBI-3867333">
        <id>A8MQ03</id>
    </interactant>
    <interactant intactId="EBI-741528">
        <id>Q9UKJ5</id>
        <label>CHIC2</label>
    </interactant>
    <organismsDiffer>false</organismsDiffer>
    <experiments>3</experiments>
</comment>
<comment type="interaction">
    <interactant intactId="EBI-3867333">
        <id>A8MQ03</id>
    </interactant>
    <interactant intactId="EBI-947551">
        <id>Q9H2X0</id>
        <label>CHRD</label>
    </interactant>
    <organismsDiffer>false</organismsDiffer>
    <experiments>3</experiments>
</comment>
<comment type="interaction">
    <interactant intactId="EBI-3867333">
        <id>A8MQ03</id>
    </interactant>
    <interactant intactId="EBI-11979451">
        <id>P07510-2</id>
        <label>CHRNG</label>
    </interactant>
    <organismsDiffer>false</organismsDiffer>
    <experiments>3</experiments>
</comment>
<comment type="interaction">
    <interactant intactId="EBI-3867333">
        <id>A8MQ03</id>
    </interactant>
    <interactant intactId="EBI-13331299">
        <id>Q8IXM7</id>
        <label>CIMAP1C</label>
    </interactant>
    <organismsDiffer>false</organismsDiffer>
    <experiments>3</experiments>
</comment>
<comment type="interaction">
    <interactant intactId="EBI-3867333">
        <id>A8MQ03</id>
    </interactant>
    <interactant intactId="EBI-11980535">
        <id>P51800-3</id>
        <label>CLCNKA</label>
    </interactant>
    <organismsDiffer>false</organismsDiffer>
    <experiments>3</experiments>
</comment>
<comment type="interaction">
    <interactant intactId="EBI-3867333">
        <id>A8MQ03</id>
    </interactant>
    <interactant intactId="EBI-12256978">
        <id>Q8N6F1-2</id>
        <label>CLDN19</label>
    </interactant>
    <organismsDiffer>false</organismsDiffer>
    <experiments>3</experiments>
</comment>
<comment type="interaction">
    <interactant intactId="EBI-3867333">
        <id>A8MQ03</id>
    </interactant>
    <interactant intactId="EBI-751440">
        <id>P57739</id>
        <label>CLDN2</label>
    </interactant>
    <organismsDiffer>false</organismsDiffer>
    <experiments>3</experiments>
</comment>
<comment type="interaction">
    <interactant intactId="EBI-3867333">
        <id>A8MQ03</id>
    </interactant>
    <interactant intactId="EBI-10173491">
        <id>A5D8T8</id>
        <label>CLEC18A</label>
    </interactant>
    <organismsDiffer>false</organismsDiffer>
    <experiments>3</experiments>
</comment>
<comment type="interaction">
    <interactant intactId="EBI-3867333">
        <id>A8MQ03</id>
    </interactant>
    <interactant intactId="EBI-741032">
        <id>Q8NE01</id>
        <label>CNNM3</label>
    </interactant>
    <organismsDiffer>false</organismsDiffer>
    <experiments>3</experiments>
</comment>
<comment type="interaction">
    <interactant intactId="EBI-3867333">
        <id>A8MQ03</id>
    </interactant>
    <interactant intactId="EBI-1050897">
        <id>P26441</id>
        <label>CNTF</label>
    </interactant>
    <organismsDiffer>false</organismsDiffer>
    <experiments>3</experiments>
</comment>
<comment type="interaction">
    <interactant intactId="EBI-3867333">
        <id>A8MQ03</id>
    </interactant>
    <interactant intactId="EBI-5458774">
        <id>Q86WW8</id>
        <label>COA5</label>
    </interactant>
    <organismsDiffer>false</organismsDiffer>
    <experiments>3</experiments>
</comment>
<comment type="interaction">
    <interactant intactId="EBI-3867333">
        <id>A8MQ03</id>
    </interactant>
    <interactant intactId="EBI-747133">
        <id>P27658</id>
        <label>COL8A1</label>
    </interactant>
    <organismsDiffer>false</organismsDiffer>
    <experiments>6</experiments>
</comment>
<comment type="interaction">
    <interactant intactId="EBI-3867333">
        <id>A8MQ03</id>
    </interactant>
    <interactant intactId="EBI-2531022">
        <id>P49747</id>
        <label>COMP</label>
    </interactant>
    <organismsDiffer>false</organismsDiffer>
    <experiments>3</experiments>
</comment>
<comment type="interaction">
    <interactant intactId="EBI-3867333">
        <id>A8MQ03</id>
    </interactant>
    <interactant intactId="EBI-6269566">
        <id>P23786</id>
        <label>CPT2</label>
    </interactant>
    <organismsDiffer>false</organismsDiffer>
    <experiments>3</experiments>
</comment>
<comment type="interaction">
    <interactant intactId="EBI-3867333">
        <id>A8MQ03</id>
    </interactant>
    <interactant intactId="EBI-713677">
        <id>Q9UGL9</id>
        <label>CRCT1</label>
    </interactant>
    <organismsDiffer>false</organismsDiffer>
    <experiments>3</experiments>
</comment>
<comment type="interaction">
    <interactant intactId="EBI-3867333">
        <id>A8MQ03</id>
    </interactant>
    <interactant intactId="EBI-10192698">
        <id>Q02930-3</id>
        <label>CREB5</label>
    </interactant>
    <organismsDiffer>false</organismsDiffer>
    <experiments>3</experiments>
</comment>
<comment type="interaction">
    <interactant intactId="EBI-3867333">
        <id>A8MQ03</id>
    </interactant>
    <interactant intactId="EBI-3870390">
        <id>P06850</id>
        <label>CRH</label>
    </interactant>
    <organismsDiffer>false</organismsDiffer>
    <experiments>3</experiments>
</comment>
<comment type="interaction">
    <interactant intactId="EBI-3867333">
        <id>A8MQ03</id>
    </interactant>
    <interactant intactId="EBI-2212355">
        <id>Q49AN0</id>
        <label>CRY2</label>
    </interactant>
    <organismsDiffer>false</organismsDiffer>
    <experiments>3</experiments>
</comment>
<comment type="interaction">
    <interactant intactId="EBI-3867333">
        <id>A8MQ03</id>
    </interactant>
    <interactant intactId="EBI-7043337">
        <id>P05813</id>
        <label>CRYBA1</label>
    </interactant>
    <organismsDiffer>false</organismsDiffer>
    <experiments>3</experiments>
</comment>
<comment type="interaction">
    <interactant intactId="EBI-3867333">
        <id>A8MQ03</id>
    </interactant>
    <interactant intactId="EBI-750444">
        <id>P53672</id>
        <label>CRYBA2</label>
    </interactant>
    <organismsDiffer>false</organismsDiffer>
    <experiments>3</experiments>
</comment>
<comment type="interaction">
    <interactant intactId="EBI-3867333">
        <id>A8MQ03</id>
    </interactant>
    <interactant intactId="EBI-2872294">
        <id>P09603</id>
        <label>CSF1</label>
    </interactant>
    <organismsDiffer>false</organismsDiffer>
    <experiments>3</experiments>
</comment>
<comment type="interaction">
    <interactant intactId="EBI-3867333">
        <id>A8MQ03</id>
    </interactant>
    <interactant intactId="EBI-8832659">
        <id>P09228</id>
        <label>CST2</label>
    </interactant>
    <organismsDiffer>false</organismsDiffer>
    <experiments>3</experiments>
</comment>
<comment type="interaction">
    <interactant intactId="EBI-3867333">
        <id>A8MQ03</id>
    </interactant>
    <interactant intactId="EBI-3923092">
        <id>Q9H4G1</id>
        <label>CST9L</label>
    </interactant>
    <organismsDiffer>false</organismsDiffer>
    <experiments>3</experiments>
</comment>
<comment type="interaction">
    <interactant intactId="EBI-3867333">
        <id>A8MQ03</id>
    </interactant>
    <interactant intactId="EBI-10295404">
        <id>Q99895</id>
        <label>CTRC</label>
    </interactant>
    <organismsDiffer>false</organismsDiffer>
    <experiments>3</experiments>
</comment>
<comment type="interaction">
    <interactant intactId="EBI-3867333">
        <id>A8MQ03</id>
    </interactant>
    <interactant intactId="EBI-5462635">
        <id>P08311</id>
        <label>CTSG</label>
    </interactant>
    <organismsDiffer>false</organismsDiffer>
    <experiments>3</experiments>
</comment>
<comment type="interaction">
    <interactant intactId="EBI-3867333">
        <id>A8MQ03</id>
    </interactant>
    <interactant intactId="EBI-8636823">
        <id>Q9UBR2</id>
        <label>CTSZ</label>
    </interactant>
    <organismsDiffer>false</organismsDiffer>
    <experiments>3</experiments>
</comment>
<comment type="interaction">
    <interactant intactId="EBI-3867333">
        <id>A8MQ03</id>
    </interactant>
    <interactant intactId="EBI-10979071">
        <id>O60888-3</id>
        <label>CUTA</label>
    </interactant>
    <organismsDiffer>false</organismsDiffer>
    <experiments>3</experiments>
</comment>
<comment type="interaction">
    <interactant intactId="EBI-3867333">
        <id>A8MQ03</id>
    </interactant>
    <interactant intactId="EBI-14156412">
        <id>Q08AG9</id>
        <label>CYP21A2</label>
    </interactant>
    <organismsDiffer>false</organismsDiffer>
    <experiments>3</experiments>
</comment>
<comment type="interaction">
    <interactant intactId="EBI-3867333">
        <id>A8MQ03</id>
    </interactant>
    <interactant intactId="EBI-3867333">
        <id>A8MQ03</id>
        <label>CYSRT1</label>
    </interactant>
    <organismsDiffer>false</organismsDiffer>
    <experiments>3</experiments>
</comment>
<comment type="interaction">
    <interactant intactId="EBI-3867333">
        <id>A8MQ03</id>
    </interactant>
    <interactant intactId="EBI-11994826">
        <id>Q5SW24-3</id>
        <label>DACT2</label>
    </interactant>
    <organismsDiffer>false</organismsDiffer>
    <experiments>3</experiments>
</comment>
<comment type="interaction">
    <interactant intactId="EBI-3867333">
        <id>A8MQ03</id>
    </interactant>
    <interactant intactId="EBI-9090939">
        <id>Q5D0E6-2</id>
        <label>DALRD3</label>
    </interactant>
    <organismsDiffer>false</organismsDiffer>
    <experiments>3</experiments>
</comment>
<comment type="interaction">
    <interactant intactId="EBI-3867333">
        <id>A8MQ03</id>
    </interactant>
    <interactant intactId="EBI-12205861">
        <id>Q8NFT6-2</id>
        <label>DBF4B</label>
    </interactant>
    <organismsDiffer>false</organismsDiffer>
    <experiments>3</experiments>
</comment>
<comment type="interaction">
    <interactant intactId="EBI-3867333">
        <id>A8MQ03</id>
    </interactant>
    <interactant intactId="EBI-10173222">
        <id>A2VCK2</id>
        <label>DCDC2B</label>
    </interactant>
    <organismsDiffer>false</organismsDiffer>
    <experiments>3</experiments>
</comment>
<comment type="interaction">
    <interactant intactId="EBI-3867333">
        <id>A8MQ03</id>
    </interactant>
    <interactant intactId="EBI-10316543">
        <id>Q9NXZ2</id>
        <label>DDX43</label>
    </interactant>
    <organismsDiffer>false</organismsDiffer>
    <experiments>3</experiments>
</comment>
<comment type="interaction">
    <interactant intactId="EBI-3867333">
        <id>A8MQ03</id>
    </interactant>
    <interactant intactId="EBI-12019838">
        <id>Q9P1A6-3</id>
        <label>DLGAP2</label>
    </interactant>
    <organismsDiffer>false</organismsDiffer>
    <experiments>3</experiments>
</comment>
<comment type="interaction">
    <interactant intactId="EBI-3867333">
        <id>A8MQ03</id>
    </interactant>
    <interactant intactId="EBI-22730614">
        <id>Q9NW81-2</id>
        <label>DMAC2</label>
    </interactant>
    <organismsDiffer>false</organismsDiffer>
    <experiments>3</experiments>
</comment>
<comment type="interaction">
    <interactant intactId="EBI-3867333">
        <id>A8MQ03</id>
    </interactant>
    <interactant intactId="EBI-9679045">
        <id>Q9NQL9</id>
        <label>DMRT3</label>
    </interactant>
    <organismsDiffer>false</organismsDiffer>
    <experiments>3</experiments>
</comment>
<comment type="interaction">
    <interactant intactId="EBI-3867333">
        <id>A8MQ03</id>
    </interactant>
    <interactant intactId="EBI-356767">
        <id>Q96EY1</id>
        <label>DNAJA3</label>
    </interactant>
    <organismsDiffer>false</organismsDiffer>
    <experiments>3</experiments>
</comment>
<comment type="interaction">
    <interactant intactId="EBI-3867333">
        <id>A8MQ03</id>
    </interactant>
    <interactant intactId="EBI-9512718">
        <id>Q13609</id>
        <label>DNASE1L3</label>
    </interactant>
    <organismsDiffer>false</organismsDiffer>
    <experiments>3</experiments>
</comment>
<comment type="interaction">
    <interactant intactId="EBI-3867333">
        <id>A8MQ03</id>
    </interactant>
    <interactant intactId="EBI-448771">
        <id>Q92608</id>
        <label>DOCK2</label>
    </interactant>
    <organismsDiffer>false</organismsDiffer>
    <experiments>3</experiments>
</comment>
<comment type="interaction">
    <interactant intactId="EBI-3867333">
        <id>A8MQ03</id>
    </interactant>
    <interactant intactId="EBI-739789">
        <id>Q92997</id>
        <label>DVL3</label>
    </interactant>
    <organismsDiffer>false</organismsDiffer>
    <experiments>3</experiments>
</comment>
<comment type="interaction">
    <interactant intactId="EBI-3867333">
        <id>A8MQ03</id>
    </interactant>
    <interactant intactId="EBI-2859983">
        <id>P42892</id>
        <label>ECE1</label>
    </interactant>
    <organismsDiffer>false</organismsDiffer>
    <experiments>3</experiments>
</comment>
<comment type="interaction">
    <interactant intactId="EBI-3867333">
        <id>A8MQ03</id>
    </interactant>
    <interactant intactId="EBI-947964">
        <id>Q16610</id>
        <label>ECM1</label>
    </interactant>
    <organismsDiffer>false</organismsDiffer>
    <experiments>3</experiments>
</comment>
<comment type="interaction">
    <interactant intactId="EBI-3867333">
        <id>A8MQ03</id>
    </interactant>
    <interactant intactId="EBI-11980989">
        <id>Q5T9C2-3</id>
        <label>EEIG1</label>
    </interactant>
    <organismsDiffer>false</organismsDiffer>
    <experiments>3</experiments>
</comment>
<comment type="interaction">
    <interactant intactId="EBI-3867333">
        <id>A8MQ03</id>
    </interactant>
    <interactant intactId="EBI-536772">
        <id>Q12805</id>
        <label>EFEMP1</label>
    </interactant>
    <organismsDiffer>false</organismsDiffer>
    <experiments>5</experiments>
</comment>
<comment type="interaction">
    <interactant intactId="EBI-3867333">
        <id>A8MQ03</id>
    </interactant>
    <interactant intactId="EBI-743414">
        <id>O95967</id>
        <label>EFEMP2</label>
    </interactant>
    <organismsDiffer>false</organismsDiffer>
    <experiments>3</experiments>
</comment>
<comment type="interaction">
    <interactant intactId="EBI-3867333">
        <id>A8MQ03</id>
    </interactant>
    <interactant intactId="EBI-6309137">
        <id>Q9NPA0</id>
        <label>EMC7</label>
    </interactant>
    <organismsDiffer>false</organismsDiffer>
    <experiments>3</experiments>
</comment>
<comment type="interaction">
    <interactant intactId="EBI-3867333">
        <id>A8MQ03</id>
    </interactant>
    <interactant intactId="EBI-744099">
        <id>Q9H0I2</id>
        <label>ENKD1</label>
    </interactant>
    <organismsDiffer>false</organismsDiffer>
    <experiments>3</experiments>
</comment>
<comment type="interaction">
    <interactant intactId="EBI-3867333">
        <id>A8MQ03</id>
    </interactant>
    <interactant intactId="EBI-12003490">
        <id>Q8TE68-2</id>
        <label>EPS8L1</label>
    </interactant>
    <organismsDiffer>false</organismsDiffer>
    <experiments>3</experiments>
</comment>
<comment type="interaction">
    <interactant intactId="EBI-3867333">
        <id>A8MQ03</id>
    </interactant>
    <interactant intactId="EBI-711389">
        <id>P84090</id>
        <label>ERH</label>
    </interactant>
    <organismsDiffer>false</organismsDiffer>
    <experiments>3</experiments>
</comment>
<comment type="interaction">
    <interactant intactId="EBI-3867333">
        <id>A8MQ03</id>
    </interactant>
    <interactant intactId="EBI-12259414">
        <id>Q92731-3</id>
        <label>ESR2</label>
    </interactant>
    <organismsDiffer>false</organismsDiffer>
    <experiments>3</experiments>
</comment>
<comment type="interaction">
    <interactant intactId="EBI-3867333">
        <id>A8MQ03</id>
    </interactant>
    <interactant intactId="EBI-751864">
        <id>Q9NVF9</id>
        <label>ETNK2</label>
    </interactant>
    <organismsDiffer>false</organismsDiffer>
    <experiments>3</experiments>
</comment>
<comment type="interaction">
    <interactant intactId="EBI-3867333">
        <id>A8MQ03</id>
    </interactant>
    <interactant intactId="EBI-10314666">
        <id>Q9NVM1</id>
        <label>EVA1B</label>
    </interactant>
    <organismsDiffer>false</organismsDiffer>
    <experiments>3</experiments>
</comment>
<comment type="interaction">
    <interactant intactId="EBI-3867333">
        <id>A8MQ03</id>
    </interactant>
    <interactant intactId="EBI-3943864">
        <id>Q8N9I5</id>
        <label>FADS6</label>
    </interactant>
    <organismsDiffer>false</organismsDiffer>
    <experiments>3</experiments>
</comment>
<comment type="interaction">
    <interactant intactId="EBI-3867333">
        <id>A8MQ03</id>
    </interactant>
    <interactant intactId="EBI-11986315">
        <id>Q9H5Z6-2</id>
        <label>FAM124B</label>
    </interactant>
    <organismsDiffer>false</organismsDiffer>
    <experiments>3</experiments>
</comment>
<comment type="interaction">
    <interactant intactId="EBI-3867333">
        <id>A8MQ03</id>
    </interactant>
    <interactant intactId="EBI-11960181">
        <id>A4D161</id>
        <label>FAM221A</label>
    </interactant>
    <organismsDiffer>false</organismsDiffer>
    <experiments>3</experiments>
</comment>
<comment type="interaction">
    <interactant intactId="EBI-3867333">
        <id>A8MQ03</id>
    </interactant>
    <interactant intactId="EBI-12006844">
        <id>A6H8Z2</id>
        <label>FAM221B</label>
    </interactant>
    <organismsDiffer>false</organismsDiffer>
    <experiments>3</experiments>
</comment>
<comment type="interaction">
    <interactant intactId="EBI-3867333">
        <id>A8MQ03</id>
    </interactant>
    <interactant intactId="EBI-2807642">
        <id>Q8WU58</id>
        <label>FAM222B</label>
    </interactant>
    <organismsDiffer>false</organismsDiffer>
    <experiments>3</experiments>
</comment>
<comment type="interaction">
    <interactant intactId="EBI-3867333">
        <id>A8MQ03</id>
    </interactant>
    <interactant intactId="EBI-1384254">
        <id>Q86UY5</id>
        <label>FAM83A</label>
    </interactant>
    <organismsDiffer>false</organismsDiffer>
    <experiments>3</experiments>
</comment>
<comment type="interaction">
    <interactant intactId="EBI-3867333">
        <id>A8MQ03</id>
    </interactant>
    <interactant intactId="EBI-6658203">
        <id>Q86YD7</id>
        <label>FAM90A1</label>
    </interactant>
    <organismsDiffer>false</organismsDiffer>
    <experiments>3</experiments>
</comment>
<comment type="interaction">
    <interactant intactId="EBI-3867333">
        <id>A8MQ03</id>
    </interactant>
    <interactant intactId="EBI-2339898">
        <id>Q9NW38</id>
        <label>FANCL</label>
    </interactant>
    <organismsDiffer>false</organismsDiffer>
    <experiments>3</experiments>
</comment>
<comment type="interaction">
    <interactant intactId="EBI-3867333">
        <id>A8MQ03</id>
    </interactant>
    <interactant intactId="EBI-2513774">
        <id>O95363</id>
        <label>FARS2</label>
    </interactant>
    <organismsDiffer>false</organismsDiffer>
    <experiments>3</experiments>
</comment>
<comment type="interaction">
    <interactant intactId="EBI-3867333">
        <id>A8MQ03</id>
    </interactant>
    <interactant intactId="EBI-495538">
        <id>P48023</id>
        <label>FASLG</label>
    </interactant>
    <organismsDiffer>false</organismsDiffer>
    <experiments>3</experiments>
</comment>
<comment type="interaction">
    <interactant intactId="EBI-3867333">
        <id>A8MQ03</id>
    </interactant>
    <interactant intactId="EBI-741068">
        <id>Q969U6</id>
        <label>FBXW5</label>
    </interactant>
    <organismsDiffer>false</organismsDiffer>
    <experiments>3</experiments>
</comment>
<comment type="interaction">
    <interactant intactId="EBI-3867333">
        <id>A8MQ03</id>
    </interactant>
    <interactant intactId="EBI-11988727">
        <id>A0PJY2</id>
        <label>FEZF1</label>
    </interactant>
    <organismsDiffer>false</organismsDiffer>
    <experiments>3</experiments>
</comment>
<comment type="interaction">
    <interactant intactId="EBI-3867333">
        <id>A8MQ03</id>
    </interactant>
    <interactant intactId="EBI-741101">
        <id>Q13643</id>
        <label>FHL3</label>
    </interactant>
    <organismsDiffer>false</organismsDiffer>
    <experiments>3</experiments>
</comment>
<comment type="interaction">
    <interactant intactId="EBI-3867333">
        <id>A8MQ03</id>
    </interactant>
    <interactant intactId="EBI-9641086">
        <id>P21333-2</id>
        <label>FLNA</label>
    </interactant>
    <organismsDiffer>false</organismsDiffer>
    <experiments>3</experiments>
</comment>
<comment type="interaction">
    <interactant intactId="EBI-3867333">
        <id>A8MQ03</id>
    </interactant>
    <interactant intactId="EBI-17282008">
        <id>O60548</id>
        <label>FOXD2</label>
    </interactant>
    <organismsDiffer>false</organismsDiffer>
    <experiments>3</experiments>
</comment>
<comment type="interaction">
    <interactant intactId="EBI-3867333">
        <id>A8MQ03</id>
    </interactant>
    <interactant intactId="EBI-11320806">
        <id>Q9NU39</id>
        <label>FOXD4L1</label>
    </interactant>
    <organismsDiffer>false</organismsDiffer>
    <experiments>3</experiments>
</comment>
<comment type="interaction">
    <interactant intactId="EBI-3867333">
        <id>A8MQ03</id>
    </interactant>
    <interactant intactId="EBI-11961494">
        <id>Q6VB84</id>
        <label>FOXD4L3</label>
    </interactant>
    <organismsDiffer>false</organismsDiffer>
    <experiments>3</experiments>
</comment>
<comment type="interaction">
    <interactant intactId="EBI-3867333">
        <id>A8MQ03</id>
    </interactant>
    <interactant intactId="EBI-1759806">
        <id>O75593</id>
        <label>FOXH1</label>
    </interactant>
    <organismsDiffer>false</organismsDiffer>
    <experiments>3</experiments>
</comment>
<comment type="interaction">
    <interactant intactId="EBI-3867333">
        <id>A8MQ03</id>
    </interactant>
    <interactant intactId="EBI-725515">
        <id>O43559</id>
        <label>FRS3</label>
    </interactant>
    <organismsDiffer>false</organismsDiffer>
    <experiments>3</experiments>
</comment>
<comment type="interaction">
    <interactant intactId="EBI-3867333">
        <id>A8MQ03</id>
    </interactant>
    <interactant intactId="EBI-2822789">
        <id>Q92765</id>
        <label>FRZB</label>
    </interactant>
    <organismsDiffer>false</organismsDiffer>
    <experiments>3</experiments>
</comment>
<comment type="interaction">
    <interactant intactId="EBI-3867333">
        <id>A8MQ03</id>
    </interactant>
    <interactant intactId="EBI-8803802">
        <id>Q9ULW2</id>
        <label>FZD10</label>
    </interactant>
    <organismsDiffer>false</organismsDiffer>
    <experiments>3</experiments>
</comment>
<comment type="interaction">
    <interactant intactId="EBI-3867333">
        <id>A8MQ03</id>
    </interactant>
    <interactant intactId="EBI-752049">
        <id>Q8NEG0</id>
        <label>GARIN6</label>
    </interactant>
    <organismsDiffer>false</organismsDiffer>
    <experiments>3</experiments>
</comment>
<comment type="interaction">
    <interactant intactId="EBI-3867333">
        <id>A8MQ03</id>
    </interactant>
    <interactant intactId="EBI-1052570">
        <id>O95995</id>
        <label>GAS8</label>
    </interactant>
    <organismsDiffer>false</organismsDiffer>
    <experiments>3</experiments>
</comment>
<comment type="interaction">
    <interactant intactId="EBI-3867333">
        <id>A8MQ03</id>
    </interactant>
    <interactant intactId="EBI-2806671">
        <id>P23769</id>
        <label>GATA2</label>
    </interactant>
    <organismsDiffer>false</organismsDiffer>
    <experiments>3</experiments>
</comment>
<comment type="interaction">
    <interactant intactId="EBI-3867333">
        <id>A8MQ03</id>
    </interactant>
    <interactant intactId="EBI-6672518">
        <id>P23771-2</id>
        <label>GATA3</label>
    </interactant>
    <organismsDiffer>false</organismsDiffer>
    <experiments>3</experiments>
</comment>
<comment type="interaction">
    <interactant intactId="EBI-3867333">
        <id>A8MQ03</id>
    </interactant>
    <interactant intactId="EBI-12132270">
        <id>Q9BWX5</id>
        <label>GATA5</label>
    </interactant>
    <organismsDiffer>false</organismsDiffer>
    <experiments>3</experiments>
</comment>
<comment type="interaction">
    <interactant intactId="EBI-3867333">
        <id>A8MQ03</id>
    </interactant>
    <interactant intactId="EBI-10267082">
        <id>Q8N6F7</id>
        <label>GCSAM</label>
    </interactant>
    <organismsDiffer>false</organismsDiffer>
    <experiments>3</experiments>
</comment>
<comment type="interaction">
    <interactant intactId="EBI-3867333">
        <id>A8MQ03</id>
    </interactant>
    <interactant intactId="EBI-744104">
        <id>P55040</id>
        <label>GEM</label>
    </interactant>
    <organismsDiffer>false</organismsDiffer>
    <experiments>3</experiments>
</comment>
<comment type="interaction">
    <interactant intactId="EBI-3867333">
        <id>A8MQ03</id>
    </interactant>
    <interactant intactId="EBI-10259069">
        <id>Q86UU5</id>
        <label>GGN</label>
    </interactant>
    <organismsDiffer>false</organismsDiffer>
    <experiments>3</experiments>
</comment>
<comment type="interaction">
    <interactant intactId="EBI-3867333">
        <id>A8MQ03</id>
    </interactant>
    <interactant intactId="EBI-11954377">
        <id>Q8IW92</id>
        <label>GLB1L2</label>
    </interactant>
    <organismsDiffer>false</organismsDiffer>
    <experiments>3</experiments>
</comment>
<comment type="interaction">
    <interactant intactId="EBI-3867333">
        <id>A8MQ03</id>
    </interactant>
    <interactant intactId="EBI-7466542">
        <id>P43220</id>
        <label>GLP1R</label>
    </interactant>
    <organismsDiffer>false</organismsDiffer>
    <experiments>3</experiments>
</comment>
<comment type="interaction">
    <interactant intactId="EBI-3867333">
        <id>A8MQ03</id>
    </interactant>
    <interactant intactId="EBI-11975289">
        <id>Q9Y223-2</id>
        <label>GNE</label>
    </interactant>
    <organismsDiffer>false</organismsDiffer>
    <experiments>3</experiments>
</comment>
<comment type="interaction">
    <interactant intactId="EBI-3867333">
        <id>A8MQ03</id>
    </interactant>
    <interactant intactId="EBI-11427343">
        <id>Q9P2W3</id>
        <label>GNG13</label>
    </interactant>
    <organismsDiffer>false</organismsDiffer>
    <experiments>3</experiments>
</comment>
<comment type="interaction">
    <interactant intactId="EBI-3867333">
        <id>A8MQ03</id>
    </interactant>
    <interactant intactId="EBI-751540">
        <id>O95872</id>
        <label>GPANK1</label>
    </interactant>
    <organismsDiffer>false</organismsDiffer>
    <experiments>3</experiments>
</comment>
<comment type="interaction">
    <interactant intactId="EBI-3867333">
        <id>A8MQ03</id>
    </interactant>
    <interactant intactId="EBI-11959863">
        <id>Q9NWQ4-1</id>
        <label>GPATCH2L</label>
    </interactant>
    <organismsDiffer>false</organismsDiffer>
    <experiments>3</experiments>
</comment>
<comment type="interaction">
    <interactant intactId="EBI-3867333">
        <id>A8MQ03</id>
    </interactant>
    <interactant intactId="EBI-713355">
        <id>Q13227</id>
        <label>GPS2</label>
    </interactant>
    <organismsDiffer>false</organismsDiffer>
    <experiments>3</experiments>
</comment>
<comment type="interaction">
    <interactant intactId="EBI-3867333">
        <id>A8MQ03</id>
    </interactant>
    <interactant intactId="EBI-747754">
        <id>P28799</id>
        <label>GRN</label>
    </interactant>
    <organismsDiffer>false</organismsDiffer>
    <experiments>3</experiments>
</comment>
<comment type="interaction">
    <interactant intactId="EBI-3867333">
        <id>A8MQ03</id>
    </interactant>
    <interactant intactId="EBI-353467">
        <id>P09211</id>
        <label>GSTP1</label>
    </interactant>
    <organismsDiffer>false</organismsDiffer>
    <experiments>3</experiments>
</comment>
<comment type="interaction">
    <interactant intactId="EBI-3867333">
        <id>A8MQ03</id>
    </interactant>
    <interactant intactId="EBI-11978177">
        <id>Q96NT3-2</id>
        <label>GUCD1</label>
    </interactant>
    <organismsDiffer>false</organismsDiffer>
    <experiments>3</experiments>
</comment>
<comment type="interaction">
    <interactant intactId="EBI-3867333">
        <id>A8MQ03</id>
    </interactant>
    <interactant intactId="EBI-719843">
        <id>P02008</id>
        <label>HBZ</label>
    </interactant>
    <organismsDiffer>false</organismsDiffer>
    <experiments>3</experiments>
</comment>
<comment type="interaction">
    <interactant intactId="EBI-3867333">
        <id>A8MQ03</id>
    </interactant>
    <interactant intactId="EBI-9834454">
        <id>P08631-2</id>
        <label>HCK</label>
    </interactant>
    <organismsDiffer>false</organismsDiffer>
    <experiments>3</experiments>
</comment>
<comment type="interaction">
    <interactant intactId="EBI-3867333">
        <id>A8MQ03</id>
    </interactant>
    <interactant intactId="EBI-745201">
        <id>Q9BSH5</id>
        <label>HDHD3</label>
    </interactant>
    <organismsDiffer>false</organismsDiffer>
    <experiments>3</experiments>
</comment>
<comment type="interaction">
    <interactant intactId="EBI-3867333">
        <id>A8MQ03</id>
    </interactant>
    <interactant intactId="EBI-750630">
        <id>Q9UBP5</id>
        <label>HEY2</label>
    </interactant>
    <organismsDiffer>false</organismsDiffer>
    <experiments>3</experiments>
</comment>
<comment type="interaction">
    <interactant intactId="EBI-3867333">
        <id>A8MQ03</id>
    </interactant>
    <interactant intactId="EBI-747421">
        <id>Q03014</id>
        <label>HHEX</label>
    </interactant>
    <organismsDiffer>false</organismsDiffer>
    <experiments>3</experiments>
</comment>
<comment type="interaction">
    <interactant intactId="EBI-3867333">
        <id>A8MQ03</id>
    </interactant>
    <interactant intactId="EBI-6678255">
        <id>Q14774</id>
        <label>HLX</label>
    </interactant>
    <organismsDiffer>false</organismsDiffer>
    <experiments>3</experiments>
</comment>
<comment type="interaction">
    <interactant intactId="EBI-3867333">
        <id>A8MQ03</id>
    </interactant>
    <interactant intactId="EBI-740785">
        <id>P49639</id>
        <label>HOXA1</label>
    </interactant>
    <organismsDiffer>false</organismsDiffer>
    <experiments>6</experiments>
</comment>
<comment type="interaction">
    <interactant intactId="EBI-3867333">
        <id>A8MQ03</id>
    </interactant>
    <interactant intactId="EBI-3893317">
        <id>P09067</id>
        <label>HOXB5</label>
    </interactant>
    <organismsDiffer>false</organismsDiffer>
    <experiments>3</experiments>
</comment>
<comment type="interaction">
    <interactant intactId="EBI-3867333">
        <id>A8MQ03</id>
    </interactant>
    <interactant intactId="EBI-745290">
        <id>P17482</id>
        <label>HOXB9</label>
    </interactant>
    <organismsDiffer>false</organismsDiffer>
    <experiments>3</experiments>
</comment>
<comment type="interaction">
    <interactant intactId="EBI-3867333">
        <id>A8MQ03</id>
    </interactant>
    <interactant intactId="EBI-1752118">
        <id>P31273</id>
        <label>HOXC8</label>
    </interactant>
    <organismsDiffer>false</organismsDiffer>
    <experiments>3</experiments>
</comment>
<comment type="interaction">
    <interactant intactId="EBI-3867333">
        <id>A8MQ03</id>
    </interactant>
    <interactant intactId="EBI-1779423">
        <id>P31274</id>
        <label>HOXC9</label>
    </interactant>
    <organismsDiffer>false</organismsDiffer>
    <experiments>3</experiments>
</comment>
<comment type="interaction">
    <interactant intactId="EBI-3867333">
        <id>A8MQ03</id>
    </interactant>
    <interactant intactId="EBI-2880706">
        <id>O43593</id>
        <label>HR</label>
    </interactant>
    <organismsDiffer>false</organismsDiffer>
    <experiments>3</experiments>
</comment>
<comment type="interaction">
    <interactant intactId="EBI-3867333">
        <id>A8MQ03</id>
    </interactant>
    <interactant intactId="EBI-3915012">
        <id>P04196</id>
        <label>HRG</label>
    </interactant>
    <organismsDiffer>false</organismsDiffer>
    <experiments>3</experiments>
</comment>
<comment type="interaction">
    <interactant intactId="EBI-3867333">
        <id>A8MQ03</id>
    </interactant>
    <interactant intactId="EBI-748664">
        <id>O75506</id>
        <label>HSBP1</label>
    </interactant>
    <organismsDiffer>false</organismsDiffer>
    <experiments>3</experiments>
</comment>
<comment type="interaction">
    <interactant intactId="EBI-3867333">
        <id>A8MQ03</id>
    </interactant>
    <interactant intactId="EBI-3918847">
        <id>Q9H2F3</id>
        <label>HSD3B7</label>
    </interactant>
    <organismsDiffer>false</organismsDiffer>
    <experiments>3</experiments>
</comment>
<comment type="interaction">
    <interactant intactId="EBI-3867333">
        <id>A8MQ03</id>
    </interactant>
    <interactant intactId="EBI-10291310">
        <id>Q96MM6</id>
        <label>HSPA12B</label>
    </interactant>
    <organismsDiffer>false</organismsDiffer>
    <experiments>3</experiments>
</comment>
<comment type="interaction">
    <interactant intactId="EBI-3867333">
        <id>A8MQ03</id>
    </interactant>
    <interactant intactId="EBI-352528">
        <id>P10809</id>
        <label>HSPD1</label>
    </interactant>
    <organismsDiffer>false</organismsDiffer>
    <experiments>3</experiments>
</comment>
<comment type="interaction">
    <interactant intactId="EBI-3867333">
        <id>A8MQ03</id>
    </interactant>
    <interactant intactId="EBI-2806068">
        <id>Q12891</id>
        <label>HYAL2</label>
    </interactant>
    <organismsDiffer>false</organismsDiffer>
    <experiments>3</experiments>
</comment>
<comment type="interaction">
    <interactant intactId="EBI-3867333">
        <id>A8MQ03</id>
    </interactant>
    <interactant intactId="EBI-1035358">
        <id>P05362</id>
        <label>ICAM1</label>
    </interactant>
    <organismsDiffer>false</organismsDiffer>
    <experiments>3</experiments>
</comment>
<comment type="interaction">
    <interactant intactId="EBI-3867333">
        <id>A8MQ03</id>
    </interactant>
    <interactant intactId="EBI-10233928">
        <id>Q14773-3</id>
        <label>ICAM4</label>
    </interactant>
    <organismsDiffer>false</organismsDiffer>
    <experiments>3</experiments>
</comment>
<comment type="interaction">
    <interactant intactId="EBI-3867333">
        <id>A8MQ03</id>
    </interactant>
    <interactant intactId="EBI-17178971">
        <id>Q14005-2</id>
        <label>IL16</label>
    </interactant>
    <organismsDiffer>false</organismsDiffer>
    <experiments>3</experiments>
</comment>
<comment type="interaction">
    <interactant intactId="EBI-3867333">
        <id>A8MQ03</id>
    </interactant>
    <interactant intactId="EBI-6509505">
        <id>Q0VD86</id>
        <label>INCA1</label>
    </interactant>
    <organismsDiffer>false</organismsDiffer>
    <experiments>3</experiments>
</comment>
<comment type="interaction">
    <interactant intactId="EBI-3867333">
        <id>A8MQ03</id>
    </interactant>
    <interactant intactId="EBI-715611">
        <id>Q9C086</id>
        <label>INO80B</label>
    </interactant>
    <organismsDiffer>false</organismsDiffer>
    <experiments>3</experiments>
</comment>
<comment type="interaction">
    <interactant intactId="EBI-3867333">
        <id>A8MQ03</id>
    </interactant>
    <interactant intactId="EBI-9092209">
        <id>Q92835-2</id>
        <label>INPP5D</label>
    </interactant>
    <organismsDiffer>false</organismsDiffer>
    <experiments>3</experiments>
</comment>
<comment type="interaction">
    <interactant intactId="EBI-3867333">
        <id>A8MQ03</id>
    </interactant>
    <interactant intactId="EBI-7090529">
        <id>P01308</id>
        <label>INS</label>
    </interactant>
    <organismsDiffer>false</organismsDiffer>
    <experiments>3</experiments>
</comment>
<comment type="interaction">
    <interactant intactId="EBI-3867333">
        <id>A8MQ03</id>
    </interactant>
    <interactant intactId="EBI-10220600">
        <id>Q8NA54</id>
        <label>IQUB</label>
    </interactant>
    <organismsDiffer>false</organismsDiffer>
    <experiments>3</experiments>
</comment>
<comment type="interaction">
    <interactant intactId="EBI-3867333">
        <id>A8MQ03</id>
    </interactant>
    <interactant intactId="EBI-720563">
        <id>Q9NPH2</id>
        <label>ISYNA1</label>
    </interactant>
    <organismsDiffer>false</organismsDiffer>
    <experiments>3</experiments>
</comment>
<comment type="interaction">
    <interactant intactId="EBI-3867333">
        <id>A8MQ03</id>
    </interactant>
    <interactant intactId="EBI-300173">
        <id>P05107</id>
        <label>ITGB2</label>
    </interactant>
    <organismsDiffer>false</organismsDiffer>
    <experiments>3</experiments>
</comment>
<comment type="interaction">
    <interactant intactId="EBI-3867333">
        <id>A8MQ03</id>
    </interactant>
    <interactant intactId="EBI-11051601">
        <id>P16144-2</id>
        <label>ITGB4</label>
    </interactant>
    <organismsDiffer>false</organismsDiffer>
    <experiments>3</experiments>
</comment>
<comment type="interaction">
    <interactant intactId="EBI-3867333">
        <id>A8MQ03</id>
    </interactant>
    <interactant intactId="EBI-1223434">
        <id>P18084</id>
        <label>ITGB5</label>
    </interactant>
    <organismsDiffer>false</organismsDiffer>
    <experiments>3</experiments>
</comment>
<comment type="interaction">
    <interactant intactId="EBI-3867333">
        <id>A8MQ03</id>
    </interactant>
    <interactant intactId="EBI-2510602">
        <id>Q15040</id>
        <label>JOSD1</label>
    </interactant>
    <organismsDiffer>false</organismsDiffer>
    <experiments>3</experiments>
</comment>
<comment type="interaction">
    <interactant intactId="EBI-3867333">
        <id>A8MQ03</id>
    </interactant>
    <interactant intactId="EBI-10323864">
        <id>Q9ULS6</id>
        <label>KCNS2</label>
    </interactant>
    <organismsDiffer>false</organismsDiffer>
    <experiments>3</experiments>
</comment>
<comment type="interaction">
    <interactant intactId="EBI-3867333">
        <id>A8MQ03</id>
    </interactant>
    <interactant intactId="EBI-12382297">
        <id>Q96SI1-2</id>
        <label>KCTD15</label>
    </interactant>
    <organismsDiffer>false</organismsDiffer>
    <experiments>3</experiments>
</comment>
<comment type="interaction">
    <interactant intactId="EBI-3867333">
        <id>A8MQ03</id>
    </interactant>
    <interactant intactId="EBI-10171456">
        <id>A0JP07</id>
        <label>KIAA1683</label>
    </interactant>
    <organismsDiffer>false</organismsDiffer>
    <experiments>3</experiments>
</comment>
<comment type="interaction">
    <interactant intactId="EBI-3867333">
        <id>A8MQ03</id>
    </interactant>
    <interactant intactId="EBI-6426443">
        <id>Q2WGJ6</id>
        <label>KLHL38</label>
    </interactant>
    <organismsDiffer>false</organismsDiffer>
    <experiments>3</experiments>
</comment>
<comment type="interaction">
    <interactant intactId="EBI-3867333">
        <id>A8MQ03</id>
    </interactant>
    <interactant intactId="EBI-3915857">
        <id>O60259</id>
        <label>KLK8</label>
    </interactant>
    <organismsDiffer>false</organismsDiffer>
    <experiments>3</experiments>
</comment>
<comment type="interaction">
    <interactant intactId="EBI-3867333">
        <id>A8MQ03</id>
    </interactant>
    <interactant intactId="EBI-10981970">
        <id>Q5T749</id>
        <label>KPRP</label>
    </interactant>
    <organismsDiffer>false</organismsDiffer>
    <experiments>7</experiments>
</comment>
<comment type="interaction">
    <interactant intactId="EBI-3867333">
        <id>A8MQ03</id>
    </interactant>
    <interactant intactId="EBI-742094">
        <id>P35900</id>
        <label>KRT20</label>
    </interactant>
    <organismsDiffer>false</organismsDiffer>
    <experiments>3</experiments>
</comment>
<comment type="interaction">
    <interactant intactId="EBI-3867333">
        <id>A8MQ03</id>
    </interactant>
    <interactant intactId="EBI-948001">
        <id>Q15323</id>
        <label>KRT31</label>
    </interactant>
    <organismsDiffer>false</organismsDiffer>
    <experiments>3</experiments>
</comment>
<comment type="interaction">
    <interactant intactId="EBI-3867333">
        <id>A8MQ03</id>
    </interactant>
    <interactant intactId="EBI-1049638">
        <id>Q14525</id>
        <label>KRT33B</label>
    </interactant>
    <organismsDiffer>false</organismsDiffer>
    <experiments>3</experiments>
</comment>
<comment type="interaction">
    <interactant intactId="EBI-3867333">
        <id>A8MQ03</id>
    </interactant>
    <interactant intactId="EBI-1047093">
        <id>O76011</id>
        <label>KRT34</label>
    </interactant>
    <organismsDiffer>false</organismsDiffer>
    <experiments>5</experiments>
</comment>
<comment type="interaction">
    <interactant intactId="EBI-3867333">
        <id>A8MQ03</id>
    </interactant>
    <interactant intactId="EBI-739648">
        <id>Q14533</id>
        <label>KRT81</label>
    </interactant>
    <organismsDiffer>false</organismsDiffer>
    <experiments>3</experiments>
</comment>
<comment type="interaction">
    <interactant intactId="EBI-3867333">
        <id>A8MQ03</id>
    </interactant>
    <interactant intactId="EBI-10221390">
        <id>P78385</id>
        <label>KRT83</label>
    </interactant>
    <organismsDiffer>false</organismsDiffer>
    <experiments>3</experiments>
</comment>
<comment type="interaction">
    <interactant intactId="EBI-3867333">
        <id>A8MQ03</id>
    </interactant>
    <interactant intactId="EBI-1049371">
        <id>P78386</id>
        <label>KRT85</label>
    </interactant>
    <organismsDiffer>false</organismsDiffer>
    <experiments>3</experiments>
</comment>
<comment type="interaction">
    <interactant intactId="EBI-3867333">
        <id>A8MQ03</id>
    </interactant>
    <interactant intactId="EBI-9996498">
        <id>O43790</id>
        <label>KRT86</label>
    </interactant>
    <organismsDiffer>false</organismsDiffer>
    <experiments>3</experiments>
</comment>
<comment type="interaction">
    <interactant intactId="EBI-3867333">
        <id>A8MQ03</id>
    </interactant>
    <interactant intactId="EBI-11959885">
        <id>Q07627</id>
        <label>KRTAP1-1</label>
    </interactant>
    <organismsDiffer>false</organismsDiffer>
    <experiments>3</experiments>
</comment>
<comment type="interaction">
    <interactant intactId="EBI-3867333">
        <id>A8MQ03</id>
    </interactant>
    <interactant intactId="EBI-11749135">
        <id>Q8IUG1</id>
        <label>KRTAP1-3</label>
    </interactant>
    <organismsDiffer>false</organismsDiffer>
    <experiments>9</experiments>
</comment>
<comment type="interaction">
    <interactant intactId="EBI-3867333">
        <id>A8MQ03</id>
    </interactant>
    <interactant intactId="EBI-11741292">
        <id>Q9BYS1</id>
        <label>KRTAP1-5</label>
    </interactant>
    <organismsDiffer>false</organismsDiffer>
    <experiments>3</experiments>
</comment>
<comment type="interaction">
    <interactant intactId="EBI-3867333">
        <id>A8MQ03</id>
    </interactant>
    <interactant intactId="EBI-11955579">
        <id>P60014</id>
        <label>KRTAP10-10</label>
    </interactant>
    <organismsDiffer>false</organismsDiffer>
    <experiments>3</experiments>
</comment>
<comment type="interaction">
    <interactant intactId="EBI-3867333">
        <id>A8MQ03</id>
    </interactant>
    <interactant intactId="EBI-10217483">
        <id>P60412</id>
        <label>KRTAP10-11</label>
    </interactant>
    <organismsDiffer>false</organismsDiffer>
    <experiments>3</experiments>
</comment>
<comment type="interaction">
    <interactant intactId="EBI-3867333">
        <id>A8MQ03</id>
    </interactant>
    <interactant intactId="EBI-10172150">
        <id>P60370</id>
        <label>KRTAP10-5</label>
    </interactant>
    <organismsDiffer>false</organismsDiffer>
    <experiments>3</experiments>
</comment>
<comment type="interaction">
    <interactant intactId="EBI-3867333">
        <id>A8MQ03</id>
    </interactant>
    <interactant intactId="EBI-10172290">
        <id>P60409</id>
        <label>KRTAP10-7</label>
    </interactant>
    <organismsDiffer>false</organismsDiffer>
    <experiments>3</experiments>
</comment>
<comment type="interaction">
    <interactant intactId="EBI-3867333">
        <id>A8MQ03</id>
    </interactant>
    <interactant intactId="EBI-10171774">
        <id>P60410</id>
        <label>KRTAP10-8</label>
    </interactant>
    <organismsDiffer>false</organismsDiffer>
    <experiments>6</experiments>
</comment>
<comment type="interaction">
    <interactant intactId="EBI-3867333">
        <id>A8MQ03</id>
    </interactant>
    <interactant intactId="EBI-10172052">
        <id>P60411</id>
        <label>KRTAP10-9</label>
    </interactant>
    <organismsDiffer>false</organismsDiffer>
    <experiments>3</experiments>
</comment>
<comment type="interaction">
    <interactant intactId="EBI-3867333">
        <id>A8MQ03</id>
    </interactant>
    <interactant intactId="EBI-1052037">
        <id>Q8IUC1</id>
        <label>KRTAP11-1</label>
    </interactant>
    <organismsDiffer>false</organismsDiffer>
    <experiments>3</experiments>
</comment>
<comment type="interaction">
    <interactant intactId="EBI-3867333">
        <id>A8MQ03</id>
    </interactant>
    <interactant intactId="EBI-10210845">
        <id>P59990</id>
        <label>KRTAP12-1</label>
    </interactant>
    <organismsDiffer>false</organismsDiffer>
    <experiments>3</experiments>
</comment>
<comment type="interaction">
    <interactant intactId="EBI-3867333">
        <id>A8MQ03</id>
    </interactant>
    <interactant intactId="EBI-10176379">
        <id>P59991</id>
        <label>KRTAP12-2</label>
    </interactant>
    <organismsDiffer>false</organismsDiffer>
    <experiments>3</experiments>
</comment>
<comment type="interaction">
    <interactant intactId="EBI-3867333">
        <id>A8MQ03</id>
    </interactant>
    <interactant intactId="EBI-11953334">
        <id>P60328</id>
        <label>KRTAP12-3</label>
    </interactant>
    <organismsDiffer>false</organismsDiffer>
    <experiments>3</experiments>
</comment>
<comment type="interaction">
    <interactant intactId="EBI-3867333">
        <id>A8MQ03</id>
    </interactant>
    <interactant intactId="EBI-10176396">
        <id>P60329</id>
        <label>KRTAP12-4</label>
    </interactant>
    <organismsDiffer>false</organismsDiffer>
    <experiments>3</experiments>
</comment>
<comment type="interaction">
    <interactant intactId="EBI-3867333">
        <id>A8MQ03</id>
    </interactant>
    <interactant intactId="EBI-11953846">
        <id>Q52LG2</id>
        <label>KRTAP13-2</label>
    </interactant>
    <organismsDiffer>false</organismsDiffer>
    <experiments>3</experiments>
</comment>
<comment type="interaction">
    <interactant intactId="EBI-3867333">
        <id>A8MQ03</id>
    </interactant>
    <interactant intactId="EBI-10241252">
        <id>Q3SY46</id>
        <label>KRTAP13-3</label>
    </interactant>
    <organismsDiffer>false</organismsDiffer>
    <experiments>3</experiments>
</comment>
<comment type="interaction">
    <interactant intactId="EBI-3867333">
        <id>A8MQ03</id>
    </interactant>
    <interactant intactId="EBI-11953996">
        <id>Q3LI77</id>
        <label>KRTAP13-4</label>
    </interactant>
    <organismsDiffer>false</organismsDiffer>
    <experiments>3</experiments>
</comment>
<comment type="interaction">
    <interactant intactId="EBI-3867333">
        <id>A8MQ03</id>
    </interactant>
    <interactant intactId="EBI-11992140">
        <id>Q3LI76</id>
        <label>KRTAP15-1</label>
    </interactant>
    <organismsDiffer>false</organismsDiffer>
    <experiments>3</experiments>
</comment>
<comment type="interaction">
    <interactant intactId="EBI-3867333">
        <id>A8MQ03</id>
    </interactant>
    <interactant intactId="EBI-12811111">
        <id>Q8IUB9</id>
        <label>KRTAP19-1</label>
    </interactant>
    <organismsDiffer>false</organismsDiffer>
    <experiments>3</experiments>
</comment>
<comment type="interaction">
    <interactant intactId="EBI-3867333">
        <id>A8MQ03</id>
    </interactant>
    <interactant intactId="EBI-12196745">
        <id>Q3LHN2</id>
        <label>KRTAP19-2</label>
    </interactant>
    <organismsDiffer>false</organismsDiffer>
    <experiments>3</experiments>
</comment>
<comment type="interaction">
    <interactant intactId="EBI-3867333">
        <id>A8MQ03</id>
    </interactant>
    <interactant intactId="EBI-12020132">
        <id>Q7Z4W3</id>
        <label>KRTAP19-3</label>
    </interactant>
    <organismsDiffer>false</organismsDiffer>
    <experiments>3</experiments>
</comment>
<comment type="interaction">
    <interactant intactId="EBI-3867333">
        <id>A8MQ03</id>
    </interactant>
    <interactant intactId="EBI-1048945">
        <id>Q3LI72</id>
        <label>KRTAP19-5</label>
    </interactant>
    <organismsDiffer>false</organismsDiffer>
    <experiments>3</experiments>
</comment>
<comment type="interaction">
    <interactant intactId="EBI-3867333">
        <id>A8MQ03</id>
    </interactant>
    <interactant intactId="EBI-12805508">
        <id>Q3LI70</id>
        <label>KRTAP19-6</label>
    </interactant>
    <organismsDiffer>false</organismsDiffer>
    <experiments>3</experiments>
</comment>
<comment type="interaction">
    <interactant intactId="EBI-3867333">
        <id>A8MQ03</id>
    </interactant>
    <interactant intactId="EBI-10241353">
        <id>Q3SYF9</id>
        <label>KRTAP19-7</label>
    </interactant>
    <organismsDiffer>false</organismsDiffer>
    <experiments>3</experiments>
</comment>
<comment type="interaction">
    <interactant intactId="EBI-3867333">
        <id>A8MQ03</id>
    </interactant>
    <interactant intactId="EBI-14065470">
        <id>Q9BYR9</id>
        <label>KRTAP2-4</label>
    </interactant>
    <organismsDiffer>false</organismsDiffer>
    <experiments>3</experiments>
</comment>
<comment type="interaction">
    <interactant intactId="EBI-3867333">
        <id>A8MQ03</id>
    </interactant>
    <interactant intactId="EBI-3957672">
        <id>Q6PEX3</id>
        <label>KRTAP26-1</label>
    </interactant>
    <organismsDiffer>false</organismsDiffer>
    <experiments>3</experiments>
</comment>
<comment type="interaction">
    <interactant intactId="EBI-3867333">
        <id>A8MQ03</id>
    </interactant>
    <interactant intactId="EBI-9996449">
        <id>Q9BYR8</id>
        <label>KRTAP3-1</label>
    </interactant>
    <organismsDiffer>false</organismsDiffer>
    <experiments>3</experiments>
</comment>
<comment type="interaction">
    <interactant intactId="EBI-3867333">
        <id>A8MQ03</id>
    </interactant>
    <interactant intactId="EBI-3957694">
        <id>Q9BYR6</id>
        <label>KRTAP3-3</label>
    </interactant>
    <organismsDiffer>false</organismsDiffer>
    <experiments>3</experiments>
</comment>
<comment type="interaction">
    <interactant intactId="EBI-3867333">
        <id>A8MQ03</id>
    </interactant>
    <interactant intactId="EBI-10302392">
        <id>Q9BYQ6</id>
        <label>KRTAP4-11</label>
    </interactant>
    <organismsDiffer>false</organismsDiffer>
    <experiments>3</experiments>
</comment>
<comment type="interaction">
    <interactant intactId="EBI-3867333">
        <id>A8MQ03</id>
    </interactant>
    <interactant intactId="EBI-739863">
        <id>Q9BQ66</id>
        <label>KRTAP4-12</label>
    </interactant>
    <organismsDiffer>false</organismsDiffer>
    <experiments>3</experiments>
</comment>
<comment type="interaction">
    <interactant intactId="EBI-3867333">
        <id>A8MQ03</id>
    </interactant>
    <interactant intactId="EBI-10172511">
        <id>Q9BYR5</id>
        <label>KRTAP4-2</label>
    </interactant>
    <organismsDiffer>false</organismsDiffer>
    <experiments>3</experiments>
</comment>
<comment type="interaction">
    <interactant intactId="EBI-3867333">
        <id>A8MQ03</id>
    </interactant>
    <interactant intactId="EBI-11958132">
        <id>Q9BYR3</id>
        <label>KRTAP4-4</label>
    </interactant>
    <organismsDiffer>false</organismsDiffer>
    <experiments>4</experiments>
</comment>
<comment type="interaction">
    <interactant intactId="EBI-3867333">
        <id>A8MQ03</id>
    </interactant>
    <interactant intactId="EBI-11993254">
        <id>Q9BYR2</id>
        <label>KRTAP4-5</label>
    </interactant>
    <organismsDiffer>false</organismsDiffer>
    <experiments>3</experiments>
</comment>
<comment type="interaction">
    <interactant intactId="EBI-3867333">
        <id>A8MQ03</id>
    </interactant>
    <interactant intactId="EBI-11993296">
        <id>Q6L8G4</id>
        <label>KRTAP5-11</label>
    </interactant>
    <organismsDiffer>false</organismsDiffer>
    <experiments>3</experiments>
</comment>
<comment type="interaction">
    <interactant intactId="EBI-3867333">
        <id>A8MQ03</id>
    </interactant>
    <interactant intactId="EBI-11974251">
        <id>Q6L8H2</id>
        <label>KRTAP5-3</label>
    </interactant>
    <organismsDiffer>false</organismsDiffer>
    <experiments>3</experiments>
</comment>
<comment type="interaction">
    <interactant intactId="EBI-3867333">
        <id>A8MQ03</id>
    </interactant>
    <interactant intactId="EBI-11963072">
        <id>Q6L8H1</id>
        <label>KRTAP5-4</label>
    </interactant>
    <organismsDiffer>false</organismsDiffer>
    <experiments>3</experiments>
</comment>
<comment type="interaction">
    <interactant intactId="EBI-3867333">
        <id>A8MQ03</id>
    </interactant>
    <interactant intactId="EBI-10250562">
        <id>Q6L8G9</id>
        <label>KRTAP5-6</label>
    </interactant>
    <organismsDiffer>false</organismsDiffer>
    <experiments>6</experiments>
</comment>
<comment type="interaction">
    <interactant intactId="EBI-3867333">
        <id>A8MQ03</id>
    </interactant>
    <interactant intactId="EBI-11987425">
        <id>Q6L8G8</id>
        <label>KRTAP5-7</label>
    </interactant>
    <organismsDiffer>false</organismsDiffer>
    <experiments>3</experiments>
</comment>
<comment type="interaction">
    <interactant intactId="EBI-3867333">
        <id>A8MQ03</id>
    </interactant>
    <interactant intactId="EBI-3958099">
        <id>P26371</id>
        <label>KRTAP5-9</label>
    </interactant>
    <organismsDiffer>false</organismsDiffer>
    <experiments>3</experiments>
</comment>
<comment type="interaction">
    <interactant intactId="EBI-3867333">
        <id>A8MQ03</id>
    </interactant>
    <interactant intactId="EBI-12111050">
        <id>Q3LI64</id>
        <label>KRTAP6-1</label>
    </interactant>
    <organismsDiffer>false</organismsDiffer>
    <experiments>6</experiments>
</comment>
<comment type="interaction">
    <interactant intactId="EBI-3867333">
        <id>A8MQ03</id>
    </interactant>
    <interactant intactId="EBI-11962084">
        <id>Q3LI66</id>
        <label>KRTAP6-2</label>
    </interactant>
    <organismsDiffer>false</organismsDiffer>
    <experiments>8</experiments>
</comment>
<comment type="interaction">
    <interactant intactId="EBI-3867333">
        <id>A8MQ03</id>
    </interactant>
    <interactant intactId="EBI-22311199">
        <id>Q3LI67</id>
        <label>KRTAP6-3</label>
    </interactant>
    <organismsDiffer>false</organismsDiffer>
    <experiments>3</experiments>
</comment>
<comment type="interaction">
    <interactant intactId="EBI-3867333">
        <id>A8MQ03</id>
    </interactant>
    <interactant intactId="EBI-10261141">
        <id>Q8IUC2</id>
        <label>KRTAP8-1</label>
    </interactant>
    <organismsDiffer>false</organismsDiffer>
    <experiments>3</experiments>
</comment>
<comment type="interaction">
    <interactant intactId="EBI-3867333">
        <id>A8MQ03</id>
    </interactant>
    <interactant intactId="EBI-1044640">
        <id>Q9BYQ4</id>
        <label>KRTAP9-2</label>
    </interactant>
    <organismsDiffer>false</organismsDiffer>
    <experiments>3</experiments>
</comment>
<comment type="interaction">
    <interactant intactId="EBI-3867333">
        <id>A8MQ03</id>
    </interactant>
    <interactant intactId="EBI-1043191">
        <id>Q9BYQ3</id>
        <label>KRTAP9-3</label>
    </interactant>
    <organismsDiffer>false</organismsDiffer>
    <experiments>3</experiments>
</comment>
<comment type="interaction">
    <interactant intactId="EBI-3867333">
        <id>A8MQ03</id>
    </interactant>
    <interactant intactId="EBI-11958364">
        <id>Q9BYQ0</id>
        <label>KRTAP9-8</label>
    </interactant>
    <organismsDiffer>false</organismsDiffer>
    <experiments>7</experiments>
</comment>
<comment type="interaction">
    <interactant intactId="EBI-3867333">
        <id>A8MQ03</id>
    </interactant>
    <interactant intactId="EBI-6424389">
        <id>Q6VAB6</id>
        <label>KSR2</label>
    </interactant>
    <organismsDiffer>false</organismsDiffer>
    <experiments>3</experiments>
</comment>
<comment type="interaction">
    <interactant intactId="EBI-3867333">
        <id>A8MQ03</id>
    </interactant>
    <interactant intactId="EBI-1052105">
        <id>Q14657</id>
        <label>LAGE3</label>
    </interactant>
    <organismsDiffer>false</organismsDiffer>
    <experiments>3</experiments>
</comment>
<comment type="interaction">
    <interactant intactId="EBI-3867333">
        <id>A8MQ03</id>
    </interactant>
    <interactant intactId="EBI-9088686">
        <id>Q14847-2</id>
        <label>LASP1</label>
    </interactant>
    <organismsDiffer>false</organismsDiffer>
    <experiments>8</experiments>
</comment>
<comment type="interaction">
    <interactant intactId="EBI-3867333">
        <id>A8MQ03</id>
    </interactant>
    <interactant intactId="EBI-11962058">
        <id>Q5T7P2</id>
        <label>LCE1A</label>
    </interactant>
    <organismsDiffer>false</organismsDiffer>
    <experiments>6</experiments>
</comment>
<comment type="interaction">
    <interactant intactId="EBI-3867333">
        <id>A8MQ03</id>
    </interactant>
    <interactant intactId="EBI-10245913">
        <id>Q5T7P3</id>
        <label>LCE1B</label>
    </interactant>
    <organismsDiffer>false</organismsDiffer>
    <experiments>3</experiments>
</comment>
<comment type="interaction">
    <interactant intactId="EBI-3867333">
        <id>A8MQ03</id>
    </interactant>
    <interactant intactId="EBI-12224199">
        <id>Q5T751</id>
        <label>LCE1C</label>
    </interactant>
    <organismsDiffer>false</organismsDiffer>
    <experiments>3</experiments>
</comment>
<comment type="interaction">
    <interactant intactId="EBI-3867333">
        <id>A8MQ03</id>
    </interactant>
    <interactant intactId="EBI-11741311">
        <id>Q5T752</id>
        <label>LCE1D</label>
    </interactant>
    <organismsDiffer>false</organismsDiffer>
    <experiments>5</experiments>
</comment>
<comment type="interaction">
    <interactant intactId="EBI-3867333">
        <id>A8MQ03</id>
    </interactant>
    <interactant intactId="EBI-11955335">
        <id>Q5T753</id>
        <label>LCE1E</label>
    </interactant>
    <organismsDiffer>false</organismsDiffer>
    <experiments>3</experiments>
</comment>
<comment type="interaction">
    <interactant intactId="EBI-3867333">
        <id>A8MQ03</id>
    </interactant>
    <interactant intactId="EBI-11958008">
        <id>Q5T754</id>
        <label>LCE1F</label>
    </interactant>
    <organismsDiffer>false</organismsDiffer>
    <experiments>6</experiments>
</comment>
<comment type="interaction">
    <interactant intactId="EBI-3867333">
        <id>A8MQ03</id>
    </interactant>
    <interactant intactId="EBI-10246607">
        <id>Q5TA79</id>
        <label>LCE2A</label>
    </interactant>
    <organismsDiffer>false</organismsDiffer>
    <experiments>3</experiments>
</comment>
<comment type="interaction">
    <interactant intactId="EBI-3867333">
        <id>A8MQ03</id>
    </interactant>
    <interactant intactId="EBI-11478468">
        <id>O14633</id>
        <label>LCE2B</label>
    </interactant>
    <organismsDiffer>false</organismsDiffer>
    <experiments>6</experiments>
</comment>
<comment type="interaction">
    <interactant intactId="EBI-3867333">
        <id>A8MQ03</id>
    </interactant>
    <interactant intactId="EBI-11973993">
        <id>Q5TA81</id>
        <label>LCE2C</label>
    </interactant>
    <organismsDiffer>false</organismsDiffer>
    <experiments>4</experiments>
</comment>
<comment type="interaction">
    <interactant intactId="EBI-3867333">
        <id>A8MQ03</id>
    </interactant>
    <interactant intactId="EBI-10246750">
        <id>Q5TA82</id>
        <label>LCE2D</label>
    </interactant>
    <organismsDiffer>false</organismsDiffer>
    <experiments>3</experiments>
</comment>
<comment type="interaction">
    <interactant intactId="EBI-3867333">
        <id>A8MQ03</id>
    </interactant>
    <interactant intactId="EBI-9394625">
        <id>Q5TA76</id>
        <label>LCE3A</label>
    </interactant>
    <organismsDiffer>false</organismsDiffer>
    <experiments>9</experiments>
</comment>
<comment type="interaction">
    <interactant intactId="EBI-3867333">
        <id>A8MQ03</id>
    </interactant>
    <interactant intactId="EBI-11974495">
        <id>Q5TA77</id>
        <label>LCE3B</label>
    </interactant>
    <organismsDiffer>false</organismsDiffer>
    <experiments>3</experiments>
</comment>
<comment type="interaction">
    <interactant intactId="EBI-3867333">
        <id>A8MQ03</id>
    </interactant>
    <interactant intactId="EBI-10245291">
        <id>Q5T5A8</id>
        <label>LCE3C</label>
    </interactant>
    <organismsDiffer>false</organismsDiffer>
    <experiments>6</experiments>
</comment>
<comment type="interaction">
    <interactant intactId="EBI-3867333">
        <id>A8MQ03</id>
    </interactant>
    <interactant intactId="EBI-6658837">
        <id>Q9BYE3</id>
        <label>LCE3D</label>
    </interactant>
    <organismsDiffer>false</organismsDiffer>
    <experiments>8</experiments>
</comment>
<comment type="interaction">
    <interactant intactId="EBI-3867333">
        <id>A8MQ03</id>
    </interactant>
    <interactant intactId="EBI-10245456">
        <id>Q5T5B0</id>
        <label>LCE3E</label>
    </interactant>
    <organismsDiffer>false</organismsDiffer>
    <experiments>8</experiments>
</comment>
<comment type="interaction">
    <interactant intactId="EBI-3867333">
        <id>A8MQ03</id>
    </interactant>
    <interactant intactId="EBI-10246358">
        <id>Q5TA78</id>
        <label>LCE4A</label>
    </interactant>
    <organismsDiffer>false</organismsDiffer>
    <experiments>7</experiments>
</comment>
<comment type="interaction">
    <interactant intactId="EBI-3867333">
        <id>A8MQ03</id>
    </interactant>
    <interactant intactId="EBI-11955689">
        <id>Q5TCM9</id>
        <label>LCE5A</label>
    </interactant>
    <organismsDiffer>false</organismsDiffer>
    <experiments>6</experiments>
</comment>
<comment type="interaction">
    <interactant intactId="EBI-3867333">
        <id>A8MQ03</id>
    </interactant>
    <interactant intactId="EBI-739546">
        <id>Q96PV6</id>
        <label>LENG8</label>
    </interactant>
    <organismsDiffer>false</organismsDiffer>
    <experiments>3</experiments>
</comment>
<comment type="interaction">
    <interactant intactId="EBI-3867333">
        <id>A8MQ03</id>
    </interactant>
    <interactant intactId="EBI-9088829">
        <id>Q6DKI2</id>
        <label>LGALS9C</label>
    </interactant>
    <organismsDiffer>false</organismsDiffer>
    <experiments>3</experiments>
</comment>
<comment type="interaction">
    <interactant intactId="EBI-3867333">
        <id>A8MQ03</id>
    </interactant>
    <interactant intactId="EBI-12132296">
        <id>Q9BU23-2</id>
        <label>LMF2</label>
    </interactant>
    <organismsDiffer>false</organismsDiffer>
    <experiments>3</experiments>
</comment>
<comment type="interaction">
    <interactant intactId="EBI-3867333">
        <id>A8MQ03</id>
    </interactant>
    <interactant intactId="EBI-12028858">
        <id>Q8IXW0</id>
        <label>LMNTD2</label>
    </interactant>
    <organismsDiffer>false</organismsDiffer>
    <experiments>3</experiments>
</comment>
<comment type="interaction">
    <interactant intactId="EBI-3867333">
        <id>A8MQ03</id>
    </interactant>
    <interactant intactId="EBI-11742507">
        <id>Q8TAP4-4</id>
        <label>LMO3</label>
    </interactant>
    <organismsDiffer>false</organismsDiffer>
    <experiments>3</experiments>
</comment>
<comment type="interaction">
    <interactant intactId="EBI-3867333">
        <id>A8MQ03</id>
    </interactant>
    <interactant intactId="EBI-2798728">
        <id>P61968</id>
        <label>LMO4</label>
    </interactant>
    <organismsDiffer>false</organismsDiffer>
    <experiments>3</experiments>
</comment>
<comment type="interaction">
    <interactant intactId="EBI-3867333">
        <id>A8MQ03</id>
    </interactant>
    <interactant intactId="EBI-739832">
        <id>Q8TBB1</id>
        <label>LNX1</label>
    </interactant>
    <organismsDiffer>false</organismsDiffer>
    <experiments>3</experiments>
</comment>
<comment type="interaction">
    <interactant intactId="EBI-3867333">
        <id>A8MQ03</id>
    </interactant>
    <interactant intactId="EBI-2341787">
        <id>Q17RB8</id>
        <label>LONRF1</label>
    </interactant>
    <organismsDiffer>false</organismsDiffer>
    <experiments>3</experiments>
</comment>
<comment type="interaction">
    <interactant intactId="EBI-3867333">
        <id>A8MQ03</id>
    </interactant>
    <interactant intactId="EBI-2690768">
        <id>Q496Y0</id>
        <label>LONRF3</label>
    </interactant>
    <organismsDiffer>false</organismsDiffer>
    <experiments>3</experiments>
</comment>
<comment type="interaction">
    <interactant intactId="EBI-3867333">
        <id>A8MQ03</id>
    </interactant>
    <interactant intactId="EBI-7910762">
        <id>Q6PJG9</id>
        <label>LRFN4</label>
    </interactant>
    <organismsDiffer>false</organismsDiffer>
    <experiments>3</experiments>
</comment>
<comment type="interaction">
    <interactant intactId="EBI-3867333">
        <id>A8MQ03</id>
    </interactant>
    <interactant intactId="EBI-721408">
        <id>Q15345</id>
        <label>LRRC41</label>
    </interactant>
    <organismsDiffer>false</organismsDiffer>
    <experiments>3</experiments>
</comment>
<comment type="interaction">
    <interactant intactId="EBI-3867333">
        <id>A8MQ03</id>
    </interactant>
    <interactant intactId="EBI-745046">
        <id>Q8WUT4</id>
        <label>LRRN4</label>
    </interactant>
    <organismsDiffer>false</organismsDiffer>
    <experiments>3</experiments>
</comment>
<comment type="interaction">
    <interactant intactId="EBI-3867333">
        <id>A8MQ03</id>
    </interactant>
    <interactant intactId="EBI-10329546">
        <id>Q9Y5Y7</id>
        <label>LYVE1</label>
    </interactant>
    <organismsDiffer>false</organismsDiffer>
    <experiments>3</experiments>
</comment>
<comment type="interaction">
    <interactant intactId="EBI-3867333">
        <id>A8MQ03</id>
    </interactant>
    <interactant intactId="EBI-2868511">
        <id>O75367</id>
        <label>MACROH2A1</label>
    </interactant>
    <organismsDiffer>false</organismsDiffer>
    <experiments>3</experiments>
</comment>
<comment type="interaction">
    <interactant intactId="EBI-3867333">
        <id>A8MQ03</id>
    </interactant>
    <interactant intactId="EBI-947402">
        <id>O60336</id>
        <label>MAPKBP1</label>
    </interactant>
    <organismsDiffer>false</organismsDiffer>
    <experiments>3</experiments>
</comment>
<comment type="interaction">
    <interactant intactId="EBI-3867333">
        <id>A8MQ03</id>
    </interactant>
    <interactant intactId="EBI-348259">
        <id>Q96EZ8</id>
        <label>MCRS1</label>
    </interactant>
    <organismsDiffer>false</organismsDiffer>
    <experiments>3</experiments>
</comment>
<comment type="interaction">
    <interactant intactId="EBI-3867333">
        <id>A8MQ03</id>
    </interactant>
    <interactant intactId="EBI-394558">
        <id>Q71SY5</id>
        <label>MED25</label>
    </interactant>
    <organismsDiffer>false</organismsDiffer>
    <experiments>3</experiments>
</comment>
<comment type="interaction">
    <interactant intactId="EBI-3867333">
        <id>A8MQ03</id>
    </interactant>
    <interactant intactId="EBI-10195914">
        <id>P08582-2</id>
        <label>MELTF</label>
    </interactant>
    <organismsDiffer>false</organismsDiffer>
    <experiments>3</experiments>
</comment>
<comment type="interaction">
    <interactant intactId="EBI-3867333">
        <id>A8MQ03</id>
    </interactant>
    <interactant intactId="EBI-16439278">
        <id>Q6FHY5</id>
        <label>MEOX2</label>
    </interactant>
    <organismsDiffer>false</organismsDiffer>
    <experiments>3</experiments>
</comment>
<comment type="interaction">
    <interactant intactId="EBI-3867333">
        <id>A8MQ03</id>
    </interactant>
    <interactant intactId="EBI-12120958">
        <id>Q14CX5</id>
        <label>MFSD13A</label>
    </interactant>
    <organismsDiffer>false</organismsDiffer>
    <experiments>3</experiments>
</comment>
<comment type="interaction">
    <interactant intactId="EBI-3867333">
        <id>A8MQ03</id>
    </interactant>
    <interactant intactId="EBI-14086479">
        <id>Q8IVT4</id>
        <label>MGC50722</label>
    </interactant>
    <organismsDiffer>false</organismsDiffer>
    <experiments>3</experiments>
</comment>
<comment type="interaction">
    <interactant intactId="EBI-3867333">
        <id>A8MQ03</id>
    </interactant>
    <interactant intactId="EBI-2801965">
        <id>Q5JXC2</id>
        <label>MIIP</label>
    </interactant>
    <organismsDiffer>false</organismsDiffer>
    <experiments>3</experiments>
</comment>
<comment type="interaction">
    <interactant intactId="EBI-3867333">
        <id>A8MQ03</id>
    </interactant>
    <interactant intactId="EBI-2340269">
        <id>Q13064</id>
        <label>MKRN3</label>
    </interactant>
    <organismsDiffer>false</organismsDiffer>
    <experiments>3</experiments>
</comment>
<comment type="interaction">
    <interactant intactId="EBI-3867333">
        <id>A8MQ03</id>
    </interactant>
    <interactant intactId="EBI-1046141">
        <id>Q16540</id>
        <label>MRPL23</label>
    </interactant>
    <organismsDiffer>false</organismsDiffer>
    <experiments>3</experiments>
</comment>
<comment type="interaction">
    <interactant intactId="EBI-3867333">
        <id>A8MQ03</id>
    </interactant>
    <interactant intactId="EBI-1053902">
        <id>Q9NQ50</id>
        <label>MRPL40</label>
    </interactant>
    <organismsDiffer>false</organismsDiffer>
    <experiments>3</experiments>
</comment>
<comment type="interaction">
    <interactant intactId="EBI-3867333">
        <id>A8MQ03</id>
    </interactant>
    <interactant intactId="EBI-12330065">
        <id>Q9NZV6</id>
        <label>MSRB1</label>
    </interactant>
    <organismsDiffer>false</organismsDiffer>
    <experiments>3</experiments>
</comment>
<comment type="interaction">
    <interactant intactId="EBI-3867333">
        <id>A8MQ03</id>
    </interactant>
    <interactant intactId="EBI-3911571">
        <id>Q8N339</id>
        <label>MT1M</label>
    </interactant>
    <organismsDiffer>false</organismsDiffer>
    <experiments>3</experiments>
</comment>
<comment type="interaction">
    <interactant intactId="EBI-3867333">
        <id>A8MQ03</id>
    </interactant>
    <interactant intactId="EBI-714236">
        <id>Q13330</id>
        <label>MTA1</label>
    </interactant>
    <organismsDiffer>false</organismsDiffer>
    <experiments>3</experiments>
</comment>
<comment type="interaction">
    <interactant intactId="EBI-3867333">
        <id>A8MQ03</id>
    </interactant>
    <interactant intactId="EBI-1188238">
        <id>P48039</id>
        <label>MTNR1A</label>
    </interactant>
    <organismsDiffer>false</organismsDiffer>
    <experiments>3</experiments>
</comment>
<comment type="interaction">
    <interactant intactId="EBI-3867333">
        <id>A8MQ03</id>
    </interactant>
    <interactant intactId="EBI-741574">
        <id>Q9BW11</id>
        <label>MXD3</label>
    </interactant>
    <organismsDiffer>false</organismsDiffer>
    <experiments>3</experiments>
</comment>
<comment type="interaction">
    <interactant intactId="EBI-3867333">
        <id>A8MQ03</id>
    </interactant>
    <interactant intactId="EBI-10211940">
        <id>P50539-3</id>
        <label>MXI1</label>
    </interactant>
    <organismsDiffer>false</organismsDiffer>
    <experiments>3</experiments>
</comment>
<comment type="interaction">
    <interactant intactId="EBI-3867333">
        <id>A8MQ03</id>
    </interactant>
    <interactant intactId="EBI-2858213">
        <id>Q86VE0</id>
        <label>MYPOP</label>
    </interactant>
    <organismsDiffer>false</organismsDiffer>
    <experiments>3</experiments>
</comment>
<comment type="interaction">
    <interactant intactId="EBI-3867333">
        <id>A8MQ03</id>
    </interactant>
    <interactant intactId="EBI-1045087">
        <id>Q16795</id>
        <label>NDUFA9</label>
    </interactant>
    <organismsDiffer>false</organismsDiffer>
    <experiments>3</experiments>
</comment>
<comment type="interaction">
    <interactant intactId="EBI-3867333">
        <id>A8MQ03</id>
    </interactant>
    <interactant intactId="EBI-2114801">
        <id>Q9BU61</id>
        <label>NDUFAF3</label>
    </interactant>
    <organismsDiffer>false</organismsDiffer>
    <experiments>3</experiments>
</comment>
<comment type="interaction">
    <interactant intactId="EBI-3867333">
        <id>A8MQ03</id>
    </interactant>
    <interactant intactId="EBI-748312">
        <id>P49821</id>
        <label>NDUFV1</label>
    </interactant>
    <organismsDiffer>false</organismsDiffer>
    <experiments>3</experiments>
</comment>
<comment type="interaction">
    <interactant intactId="EBI-3867333">
        <id>A8MQ03</id>
    </interactant>
    <interactant intactId="EBI-6979889">
        <id>Q92692-2</id>
        <label>NECTIN2</label>
    </interactant>
    <organismsDiffer>false</organismsDiffer>
    <experiments>3</experiments>
</comment>
<comment type="interaction">
    <interactant intactId="EBI-3867333">
        <id>A8MQ03</id>
    </interactant>
    <interactant intactId="EBI-12106440">
        <id>Q9NQS3-2</id>
        <label>NECTIN3</label>
    </interactant>
    <organismsDiffer>false</organismsDiffer>
    <experiments>3</experiments>
</comment>
<comment type="interaction">
    <interactant intactId="EBI-3867333">
        <id>A8MQ03</id>
    </interactant>
    <interactant intactId="EBI-10327976">
        <id>Q9Y3R4</id>
        <label>NEU2</label>
    </interactant>
    <organismsDiffer>false</organismsDiffer>
    <experiments>3</experiments>
</comment>
<comment type="interaction">
    <interactant intactId="EBI-3867333">
        <id>A8MQ03</id>
    </interactant>
    <interactant intactId="EBI-10277551">
        <id>Q8WWR8-2</id>
        <label>NEU4</label>
    </interactant>
    <organismsDiffer>false</organismsDiffer>
    <experiments>3</experiments>
</comment>
<comment type="interaction">
    <interactant intactId="EBI-3867333">
        <id>A8MQ03</id>
    </interactant>
    <interactant intactId="EBI-1538217">
        <id>Q969G9</id>
        <label>NKD1</label>
    </interactant>
    <organismsDiffer>false</organismsDiffer>
    <experiments>3</experiments>
</comment>
<comment type="interaction">
    <interactant intactId="EBI-3867333">
        <id>A8MQ03</id>
    </interactant>
    <interactant intactId="EBI-10210351">
        <id>P48645</id>
        <label>NMU</label>
    </interactant>
    <organismsDiffer>false</organismsDiffer>
    <experiments>3</experiments>
</comment>
<comment type="interaction">
    <interactant intactId="EBI-3867333">
        <id>A8MQ03</id>
    </interactant>
    <interactant intactId="EBI-22310682">
        <id>P0DPK4</id>
        <label>NOTCH2NLC</label>
    </interactant>
    <organismsDiffer>false</organismsDiffer>
    <experiments>3</experiments>
</comment>
<comment type="interaction">
    <interactant intactId="EBI-3867333">
        <id>A8MQ03</id>
    </interactant>
    <interactant intactId="EBI-12025760">
        <id>Q86UR1-2</id>
        <label>NOXA1</label>
    </interactant>
    <organismsDiffer>false</organismsDiffer>
    <experiments>3</experiments>
</comment>
<comment type="interaction">
    <interactant intactId="EBI-3867333">
        <id>A8MQ03</id>
    </interactant>
    <interactant intactId="EBI-10210114">
        <id>P48146</id>
        <label>NPBWR2</label>
    </interactant>
    <organismsDiffer>false</organismsDiffer>
    <experiments>3</experiments>
</comment>
<comment type="interaction">
    <interactant intactId="EBI-3867333">
        <id>A8MQ03</id>
    </interactant>
    <interactant intactId="EBI-748927">
        <id>Q9NQX5</id>
        <label>NPDC1</label>
    </interactant>
    <organismsDiffer>false</organismsDiffer>
    <experiments>3</experiments>
</comment>
<comment type="interaction">
    <interactant intactId="EBI-3867333">
        <id>A8MQ03</id>
    </interactant>
    <interactant intactId="EBI-747044">
        <id>P16860</id>
        <label>NPPB</label>
    </interactant>
    <organismsDiffer>false</organismsDiffer>
    <experiments>3</experiments>
</comment>
<comment type="interaction">
    <interactant intactId="EBI-3867333">
        <id>A8MQ03</id>
    </interactant>
    <interactant intactId="EBI-12839590">
        <id>Q9Y639-1</id>
        <label>NPTN</label>
    </interactant>
    <organismsDiffer>false</organismsDiffer>
    <experiments>3</experiments>
</comment>
<comment type="interaction">
    <interactant intactId="EBI-3867333">
        <id>A8MQ03</id>
    </interactant>
    <interactant intactId="EBI-10250949">
        <id>Q6NSM0</id>
        <label>NR1D2</label>
    </interactant>
    <organismsDiffer>false</organismsDiffer>
    <experiments>3</experiments>
</comment>
<comment type="interaction">
    <interactant intactId="EBI-3867333">
        <id>A8MQ03</id>
    </interactant>
    <interactant intactId="EBI-13644623">
        <id>Q92570</id>
        <label>NR4A3</label>
    </interactant>
    <organismsDiffer>false</organismsDiffer>
    <experiments>3</experiments>
</comment>
<comment type="interaction">
    <interactant intactId="EBI-3867333">
        <id>A8MQ03</id>
    </interactant>
    <interactant intactId="EBI-11110981">
        <id>Q96L73-2</id>
        <label>NSD1</label>
    </interactant>
    <organismsDiffer>false</organismsDiffer>
    <experiments>3</experiments>
</comment>
<comment type="interaction">
    <interactant intactId="EBI-3867333">
        <id>A8MQ03</id>
    </interactant>
    <interactant intactId="EBI-741158">
        <id>Q96HA8</id>
        <label>NTAQ1</label>
    </interactant>
    <organismsDiffer>false</organismsDiffer>
    <experiments>3</experiments>
</comment>
<comment type="interaction">
    <interactant intactId="EBI-3867333">
        <id>A8MQ03</id>
    </interactant>
    <interactant intactId="EBI-743459">
        <id>Q9HB63</id>
        <label>NTN4</label>
    </interactant>
    <organismsDiffer>false</organismsDiffer>
    <experiments>3</experiments>
</comment>
<comment type="interaction">
    <interactant intactId="EBI-3867333">
        <id>A8MQ03</id>
    </interactant>
    <interactant intactId="EBI-1048886">
        <id>Q9Y5Y2</id>
        <label>NUBP2</label>
    </interactant>
    <organismsDiffer>false</organismsDiffer>
    <experiments>3</experiments>
</comment>
<comment type="interaction">
    <interactant intactId="EBI-3867333">
        <id>A8MQ03</id>
    </interactant>
    <interactant intactId="EBI-1210753">
        <id>Q7Z417</id>
        <label>NUFIP2</label>
    </interactant>
    <organismsDiffer>false</organismsDiffer>
    <experiments>3</experiments>
</comment>
<comment type="interaction">
    <interactant intactId="EBI-3867333">
        <id>A8MQ03</id>
    </interactant>
    <interactant intactId="EBI-10225049">
        <id>Q7RTU3</id>
        <label>OLIG3</label>
    </interactant>
    <organismsDiffer>false</organismsDiffer>
    <experiments>3</experiments>
</comment>
<comment type="interaction">
    <interactant intactId="EBI-3867333">
        <id>A8MQ03</id>
    </interactant>
    <interactant intactId="EBI-13329281">
        <id>O14581</id>
        <label>OR7A17</label>
    </interactant>
    <organismsDiffer>false</organismsDiffer>
    <experiments>3</experiments>
</comment>
<comment type="interaction">
    <interactant intactId="EBI-3867333">
        <id>A8MQ03</id>
    </interactant>
    <interactant intactId="EBI-12038159">
        <id>Q8NHW6</id>
        <label>OTOS</label>
    </interactant>
    <organismsDiffer>false</organismsDiffer>
    <experiments>3</experiments>
</comment>
<comment type="interaction">
    <interactant intactId="EBI-3867333">
        <id>A8MQ03</id>
    </interactant>
    <interactant intactId="EBI-740446">
        <id>P32242</id>
        <label>OTX1</label>
    </interactant>
    <organismsDiffer>false</organismsDiffer>
    <experiments>3</experiments>
</comment>
<comment type="interaction">
    <interactant intactId="EBI-3867333">
        <id>A8MQ03</id>
    </interactant>
    <interactant intactId="EBI-1753251">
        <id>Q99572</id>
        <label>P2RX7</label>
    </interactant>
    <organismsDiffer>false</organismsDiffer>
    <experiments>3</experiments>
</comment>
<comment type="interaction">
    <interactant intactId="EBI-3867333">
        <id>A8MQ03</id>
    </interactant>
    <interactant intactId="EBI-11022007">
        <id>Q9HBE1-4</id>
        <label>PATZ1</label>
    </interactant>
    <organismsDiffer>false</organismsDiffer>
    <experiments>3</experiments>
</comment>
<comment type="interaction">
    <interactant intactId="EBI-3867333">
        <id>A8MQ03</id>
    </interactant>
    <interactant intactId="EBI-11956269">
        <id>Q92824-2</id>
        <label>PCSK5</label>
    </interactant>
    <organismsDiffer>false</organismsDiffer>
    <experiments>3</experiments>
</comment>
<comment type="interaction">
    <interactant intactId="EBI-3867333">
        <id>A8MQ03</id>
    </interactant>
    <interactant intactId="EBI-11524542">
        <id>O76083-2</id>
        <label>PDE9A</label>
    </interactant>
    <organismsDiffer>false</organismsDiffer>
    <experiments>3</experiments>
</comment>
<comment type="interaction">
    <interactant intactId="EBI-3867333">
        <id>A8MQ03</id>
    </interactant>
    <interactant intactId="EBI-12092917">
        <id>Q9UHJ9-5</id>
        <label>PGAP2</label>
    </interactant>
    <organismsDiffer>false</organismsDiffer>
    <experiments>3</experiments>
</comment>
<comment type="interaction">
    <interactant intactId="EBI-3867333">
        <id>A8MQ03</id>
    </interactant>
    <interactant intactId="EBI-10310808">
        <id>Q9HCN3</id>
        <label>PGAP6</label>
    </interactant>
    <organismsDiffer>false</organismsDiffer>
    <experiments>3</experiments>
</comment>
<comment type="interaction">
    <interactant intactId="EBI-3867333">
        <id>A8MQ03</id>
    </interactant>
    <interactant intactId="EBI-14131832">
        <id>Q8N4B1-4</id>
        <label>PHETA1</label>
    </interactant>
    <organismsDiffer>false</organismsDiffer>
    <experiments>3</experiments>
</comment>
<comment type="interaction">
    <interactant intactId="EBI-3867333">
        <id>A8MQ03</id>
    </interactant>
    <interactant intactId="EBI-14084211">
        <id>A2BDE7</id>
        <label>PHLDA1</label>
    </interactant>
    <organismsDiffer>false</organismsDiffer>
    <experiments>3</experiments>
</comment>
<comment type="interaction">
    <interactant intactId="EBI-3867333">
        <id>A8MQ03</id>
    </interactant>
    <interactant intactId="EBI-748265">
        <id>P78337</id>
        <label>PITX1</label>
    </interactant>
    <organismsDiffer>false</organismsDiffer>
    <experiments>3</experiments>
</comment>
<comment type="interaction">
    <interactant intactId="EBI-3867333">
        <id>A8MQ03</id>
    </interactant>
    <interactant intactId="EBI-12138495">
        <id>Q99697-2</id>
        <label>PITX2</label>
    </interactant>
    <organismsDiffer>false</organismsDiffer>
    <experiments>3</experiments>
</comment>
<comment type="interaction">
    <interactant intactId="EBI-3867333">
        <id>A8MQ03</id>
    </interactant>
    <interactant intactId="EBI-7813714">
        <id>Q13563</id>
        <label>PKD2</label>
    </interactant>
    <organismsDiffer>false</organismsDiffer>
    <experiments>3</experiments>
</comment>
<comment type="interaction">
    <interactant intactId="EBI-3867333">
        <id>A8MQ03</id>
    </interactant>
    <interactant intactId="EBI-602382">
        <id>Q16512</id>
        <label>PKN1</label>
    </interactant>
    <organismsDiffer>false</organismsDiffer>
    <experiments>3</experiments>
</comment>
<comment type="interaction">
    <interactant intactId="EBI-3867333">
        <id>A8MQ03</id>
    </interactant>
    <interactant intactId="EBI-726466">
        <id>O15496</id>
        <label>PLA2G10</label>
    </interactant>
    <organismsDiffer>false</organismsDiffer>
    <experiments>3</experiments>
</comment>
<comment type="interaction">
    <interactant intactId="EBI-3867333">
        <id>A8MQ03</id>
    </interactant>
    <interactant intactId="EBI-12014286">
        <id>Q494U1-3</id>
        <label>PLEKHN1</label>
    </interactant>
    <organismsDiffer>false</organismsDiffer>
    <experiments>3</experiments>
</comment>
<comment type="interaction">
    <interactant intactId="EBI-3867333">
        <id>A8MQ03</id>
    </interactant>
    <interactant intactId="EBI-3919291">
        <id>Q9Y342</id>
        <label>PLLP</label>
    </interactant>
    <organismsDiffer>false</organismsDiffer>
    <experiments>4</experiments>
</comment>
<comment type="interaction">
    <interactant intactId="EBI-3867333">
        <id>A8MQ03</id>
    </interactant>
    <interactant intactId="EBI-716569">
        <id>P28340</id>
        <label>POLD1</label>
    </interactant>
    <organismsDiffer>false</organismsDiffer>
    <experiments>3</experiments>
</comment>
<comment type="interaction">
    <interactant intactId="EBI-3867333">
        <id>A8MQ03</id>
    </interactant>
    <interactant intactId="EBI-17236143">
        <id>Q12837</id>
        <label>POU4F2</label>
    </interactant>
    <organismsDiffer>false</organismsDiffer>
    <experiments>3</experiments>
</comment>
<comment type="interaction">
    <interactant intactId="EBI-3867333">
        <id>A8MQ03</id>
    </interactant>
    <interactant intactId="EBI-352350">
        <id>P62140</id>
        <label>PPP1CB</label>
    </interactant>
    <organismsDiffer>false</organismsDiffer>
    <experiments>3</experiments>
</comment>
<comment type="interaction">
    <interactant intactId="EBI-3867333">
        <id>A8MQ03</id>
    </interactant>
    <interactant intactId="EBI-12121422">
        <id>P01298</id>
        <label>PPY</label>
    </interactant>
    <organismsDiffer>false</organismsDiffer>
    <experiments>3</experiments>
</comment>
<comment type="interaction">
    <interactant intactId="EBI-3867333">
        <id>A8MQ03</id>
    </interactant>
    <interactant intactId="EBI-724466">
        <id>P14222</id>
        <label>PRF1</label>
    </interactant>
    <organismsDiffer>false</organismsDiffer>
    <experiments>3</experiments>
</comment>
<comment type="interaction">
    <interactant intactId="EBI-3867333">
        <id>A8MQ03</id>
    </interactant>
    <interactant intactId="EBI-1383852">
        <id>P54646</id>
        <label>PRKAA2</label>
    </interactant>
    <organismsDiffer>false</organismsDiffer>
    <experiments>3</experiments>
</comment>
<comment type="interaction">
    <interactant intactId="EBI-3867333">
        <id>A8MQ03</id>
    </interactant>
    <interactant intactId="EBI-1053424">
        <id>O43741</id>
        <label>PRKAB2</label>
    </interactant>
    <organismsDiffer>false</organismsDiffer>
    <experiments>4</experiments>
</comment>
<comment type="interaction">
    <interactant intactId="EBI-3867333">
        <id>A8MQ03</id>
    </interactant>
    <interactant intactId="EBI-1383018">
        <id>P04070</id>
        <label>PROC</label>
    </interactant>
    <organismsDiffer>false</organismsDiffer>
    <experiments>3</experiments>
</comment>
<comment type="interaction">
    <interactant intactId="EBI-3867333">
        <id>A8MQ03</id>
    </interactant>
    <interactant intactId="EBI-9027467">
        <id>O75360</id>
        <label>PROP1</label>
    </interactant>
    <organismsDiffer>false</organismsDiffer>
    <experiments>3</experiments>
</comment>
<comment type="interaction">
    <interactant intactId="EBI-3867333">
        <id>A8MQ03</id>
    </interactant>
    <interactant intactId="EBI-1567797">
        <id>Q8WWY3</id>
        <label>PRPF31</label>
    </interactant>
    <organismsDiffer>false</organismsDiffer>
    <experiments>3</experiments>
</comment>
<comment type="interaction">
    <interactant intactId="EBI-3867333">
        <id>A8MQ03</id>
    </interactant>
    <interactant intactId="EBI-11998870">
        <id>A6NJB7-2</id>
        <label>PRR19</label>
    </interactant>
    <organismsDiffer>false</organismsDiffer>
    <experiments>3</experiments>
</comment>
<comment type="interaction">
    <interactant intactId="EBI-3867333">
        <id>A8MQ03</id>
    </interactant>
    <interactant intactId="EBI-12360827">
        <id>Q53SZ7</id>
        <label>PRR30</label>
    </interactant>
    <organismsDiffer>false</organismsDiffer>
    <experiments>3</experiments>
</comment>
<comment type="interaction">
    <interactant intactId="EBI-3867333">
        <id>A8MQ03</id>
    </interactant>
    <interactant intactId="EBI-11959565">
        <id>Q9NV39</id>
        <label>PRR34</label>
    </interactant>
    <organismsDiffer>false</organismsDiffer>
    <experiments>3</experiments>
</comment>
<comment type="interaction">
    <interactant intactId="EBI-3867333">
        <id>A8MQ03</id>
    </interactant>
    <interactant intactId="EBI-11986293">
        <id>P0CG20</id>
        <label>PRR35</label>
    </interactant>
    <organismsDiffer>false</organismsDiffer>
    <experiments>3</experiments>
</comment>
<comment type="interaction">
    <interactant intactId="EBI-3867333">
        <id>A8MQ03</id>
    </interactant>
    <interactant intactId="EBI-948821">
        <id>P41222</id>
        <label>PTGDS</label>
    </interactant>
    <organismsDiffer>false</organismsDiffer>
    <experiments>3</experiments>
</comment>
<comment type="interaction">
    <interactant intactId="EBI-3867333">
        <id>A8MQ03</id>
    </interactant>
    <interactant intactId="EBI-7199479">
        <id>Q8WUK0</id>
        <label>PTPMT1</label>
    </interactant>
    <organismsDiffer>false</organismsDiffer>
    <experiments>3</experiments>
</comment>
<comment type="interaction">
    <interactant intactId="EBI-3867333">
        <id>A8MQ03</id>
    </interactant>
    <interactant intactId="EBI-3919694">
        <id>P15151</id>
        <label>PVR</label>
    </interactant>
    <organismsDiffer>false</organismsDiffer>
    <experiments>3</experiments>
</comment>
<comment type="interaction">
    <interactant intactId="EBI-3867333">
        <id>A8MQ03</id>
    </interactant>
    <interactant intactId="EBI-2798044">
        <id>Q2TAL8</id>
        <label>QRICH1</label>
    </interactant>
    <organismsDiffer>false</organismsDiffer>
    <experiments>3</experiments>
</comment>
<comment type="interaction">
    <interactant intactId="EBI-3867333">
        <id>A8MQ03</id>
    </interactant>
    <interactant intactId="EBI-948428">
        <id>Q9Y2K5</id>
        <label>R3HDM2</label>
    </interactant>
    <organismsDiffer>false</organismsDiffer>
    <experiments>3</experiments>
</comment>
<comment type="interaction">
    <interactant intactId="EBI-3867333">
        <id>A8MQ03</id>
    </interactant>
    <interactant intactId="EBI-743796">
        <id>Q8TBN0</id>
        <label>RAB3IL1</label>
    </interactant>
    <organismsDiffer>false</organismsDiffer>
    <experiments>3</experiments>
</comment>
<comment type="interaction">
    <interactant intactId="EBI-3867333">
        <id>A8MQ03</id>
    </interactant>
    <interactant intactId="EBI-12005546">
        <id>Q12967-6</id>
        <label>RALGDS</label>
    </interactant>
    <organismsDiffer>false</organismsDiffer>
    <experiments>3</experiments>
</comment>
<comment type="interaction">
    <interactant intactId="EBI-3867333">
        <id>A8MQ03</id>
    </interactant>
    <interactant intactId="EBI-744023">
        <id>Q9BTL3</id>
        <label>RAMAC</label>
    </interactant>
    <organismsDiffer>false</organismsDiffer>
    <experiments>3</experiments>
</comment>
<comment type="interaction">
    <interactant intactId="EBI-3867333">
        <id>A8MQ03</id>
    </interactant>
    <interactant intactId="EBI-720447">
        <id>O60896</id>
        <label>RAMP3</label>
    </interactant>
    <organismsDiffer>false</organismsDiffer>
    <experiments>6</experiments>
</comment>
<comment type="interaction">
    <interactant intactId="EBI-3867333">
        <id>A8MQ03</id>
    </interactant>
    <interactant intactId="EBI-740818">
        <id>Q9Y272</id>
        <label>RASD1</label>
    </interactant>
    <organismsDiffer>false</organismsDiffer>
    <experiments>3</experiments>
</comment>
<comment type="interaction">
    <interactant intactId="EBI-3867333">
        <id>A8MQ03</id>
    </interactant>
    <interactant intactId="EBI-2602260">
        <id>Q9NW64</id>
        <label>RBM22</label>
    </interactant>
    <organismsDiffer>false</organismsDiffer>
    <experiments>3</experiments>
</comment>
<comment type="interaction">
    <interactant intactId="EBI-3867333">
        <id>A8MQ03</id>
    </interactant>
    <interactant intactId="EBI-12806054">
        <id>P10745</id>
        <label>RBP3</label>
    </interactant>
    <organismsDiffer>false</organismsDiffer>
    <experiments>3</experiments>
</comment>
<comment type="interaction">
    <interactant intactId="EBI-3867333">
        <id>A8MQ03</id>
    </interactant>
    <interactant intactId="EBI-10253121">
        <id>Q6P9E2</id>
        <label>RECK</label>
    </interactant>
    <organismsDiffer>false</organismsDiffer>
    <experiments>3</experiments>
</comment>
<comment type="interaction">
    <interactant intactId="EBI-3867333">
        <id>A8MQ03</id>
    </interactant>
    <interactant intactId="EBI-11304833">
        <id>Q8IYK8</id>
        <label>REM2</label>
    </interactant>
    <organismsDiffer>false</organismsDiffer>
    <experiments>3</experiments>
</comment>
<comment type="interaction">
    <interactant intactId="EBI-3867333">
        <id>A8MQ03</id>
    </interactant>
    <interactant intactId="EBI-712355">
        <id>O15211</id>
        <label>RGL2</label>
    </interactant>
    <organismsDiffer>false</organismsDiffer>
    <experiments>3</experiments>
</comment>
<comment type="interaction">
    <interactant intactId="EBI-3867333">
        <id>A8MQ03</id>
    </interactant>
    <interactant intactId="EBI-12006708">
        <id>P49796-4</id>
        <label>RGS3</label>
    </interactant>
    <organismsDiffer>false</organismsDiffer>
    <experiments>3</experiments>
</comment>
<comment type="interaction">
    <interactant intactId="EBI-3867333">
        <id>A8MQ03</id>
    </interactant>
    <interactant intactId="EBI-12006870">
        <id>Q9H310-3</id>
        <label>RHBG</label>
    </interactant>
    <organismsDiffer>false</organismsDiffer>
    <experiments>3</experiments>
</comment>
<comment type="interaction">
    <interactant intactId="EBI-3867333">
        <id>A8MQ03</id>
    </interactant>
    <interactant intactId="EBI-9658624">
        <id>Q9BSD3</id>
        <label>RHNO1</label>
    </interactant>
    <organismsDiffer>false</organismsDiffer>
    <experiments>3</experiments>
</comment>
<comment type="interaction">
    <interactant intactId="EBI-3867333">
        <id>A8MQ03</id>
    </interactant>
    <interactant intactId="EBI-2341200">
        <id>Q9H0F5</id>
        <label>RNF38</label>
    </interactant>
    <organismsDiffer>false</organismsDiffer>
    <experiments>3</experiments>
</comment>
<comment type="interaction">
    <interactant intactId="EBI-3867333">
        <id>A8MQ03</id>
    </interactant>
    <interactant intactId="EBI-4479407">
        <id>Q86WX3</id>
        <label>RPS19BP1</label>
    </interactant>
    <organismsDiffer>false</organismsDiffer>
    <experiments>3</experiments>
</comment>
<comment type="interaction">
    <interactant intactId="EBI-3867333">
        <id>A8MQ03</id>
    </interactant>
    <interactant intactId="EBI-5458784">
        <id>Q6P087</id>
        <label>RPUSD3</label>
    </interactant>
    <organismsDiffer>false</organismsDiffer>
    <experiments>3</experiments>
</comment>
<comment type="interaction">
    <interactant intactId="EBI-3867333">
        <id>A8MQ03</id>
    </interactant>
    <interactant intactId="EBI-12009390">
        <id>Q6UXX9-2</id>
        <label>RSPO2</label>
    </interactant>
    <organismsDiffer>false</organismsDiffer>
    <experiments>3</experiments>
</comment>
<comment type="interaction">
    <interactant intactId="EBI-3867333">
        <id>A8MQ03</id>
    </interactant>
    <interactant intactId="EBI-2561646">
        <id>Q86UD0</id>
        <label>SAPCD2</label>
    </interactant>
    <organismsDiffer>false</organismsDiffer>
    <experiments>3</experiments>
</comment>
<comment type="interaction">
    <interactant intactId="EBI-3867333">
        <id>A8MQ03</id>
    </interactant>
    <interactant intactId="EBI-3957636">
        <id>Q8IYX7</id>
        <label>SAXO1</label>
    </interactant>
    <organismsDiffer>false</organismsDiffer>
    <experiments>3</experiments>
</comment>
<comment type="interaction">
    <interactant intactId="EBI-3867333">
        <id>A8MQ03</id>
    </interactant>
    <interactant intactId="EBI-12000762">
        <id>Q7Z5V6-2</id>
        <label>SAXO4</label>
    </interactant>
    <organismsDiffer>false</organismsDiffer>
    <experiments>3</experiments>
</comment>
<comment type="interaction">
    <interactant intactId="EBI-3867333">
        <id>A8MQ03</id>
    </interactant>
    <interactant intactId="EBI-12021638">
        <id>Q8NA69</id>
        <label>SAXO5</label>
    </interactant>
    <organismsDiffer>false</organismsDiffer>
    <experiments>3</experiments>
</comment>
<comment type="interaction">
    <interactant intactId="EBI-3867333">
        <id>A8MQ03</id>
    </interactant>
    <interactant intactId="EBI-12056025">
        <id>Q14162</id>
        <label>SCARF1</label>
    </interactant>
    <organismsDiffer>false</organismsDiffer>
    <experiments>3</experiments>
</comment>
<comment type="interaction">
    <interactant intactId="EBI-3867333">
        <id>A8MQ03</id>
    </interactant>
    <interactant intactId="EBI-748391">
        <id>Q9BWG6</id>
        <label>SCNM1</label>
    </interactant>
    <organismsDiffer>false</organismsDiffer>
    <experiments>3</experiments>
</comment>
<comment type="interaction">
    <interactant intactId="EBI-3867333">
        <id>A8MQ03</id>
    </interactant>
    <interactant intactId="EBI-11017428">
        <id>Q13214-2</id>
        <label>SEMA3B</label>
    </interactant>
    <organismsDiffer>false</organismsDiffer>
    <experiments>3</experiments>
</comment>
<comment type="interaction">
    <interactant intactId="EBI-3867333">
        <id>A8MQ03</id>
    </interactant>
    <interactant intactId="EBI-10303490">
        <id>Q9C0C4</id>
        <label>SEMA4C</label>
    </interactant>
    <organismsDiffer>false</organismsDiffer>
    <experiments>3</experiments>
</comment>
<comment type="interaction">
    <interactant intactId="EBI-3867333">
        <id>A8MQ03</id>
    </interactant>
    <interactant intactId="EBI-346595">
        <id>Q96B97</id>
        <label>SH3KBP1</label>
    </interactant>
    <organismsDiffer>false</organismsDiffer>
    <experiments>3</experiments>
</comment>
<comment type="interaction">
    <interactant intactId="EBI-3867333">
        <id>A8MQ03</id>
    </interactant>
    <interactant intactId="EBI-2130111">
        <id>Q8TEC5</id>
        <label>SH3RF2</label>
    </interactant>
    <organismsDiffer>false</organismsDiffer>
    <experiments>3</experiments>
</comment>
<comment type="interaction">
    <interactant intactId="EBI-3867333">
        <id>A8MQ03</id>
    </interactant>
    <interactant intactId="EBI-11955083">
        <id>Q9NUL5-4</id>
        <label>SHFL</label>
    </interactant>
    <organismsDiffer>false</organismsDiffer>
    <experiments>3</experiments>
</comment>
<comment type="interaction">
    <interactant intactId="EBI-3867333">
        <id>A8MQ03</id>
    </interactant>
    <interactant intactId="EBI-12037847">
        <id>Q6ZSJ9</id>
        <label>SHISA6</label>
    </interactant>
    <organismsDiffer>false</organismsDiffer>
    <experiments>3</experiments>
</comment>
<comment type="interaction">
    <interactant intactId="EBI-3867333">
        <id>A8MQ03</id>
    </interactant>
    <interactant intactId="EBI-7244836">
        <id>Q9UP95</id>
        <label>SLC12A4</label>
    </interactant>
    <organismsDiffer>false</organismsDiffer>
    <experiments>3</experiments>
</comment>
<comment type="interaction">
    <interactant intactId="EBI-3867333">
        <id>A8MQ03</id>
    </interactant>
    <interactant intactId="EBI-12002412">
        <id>Q86YT5</id>
        <label>SLC13A5</label>
    </interactant>
    <organismsDiffer>false</organismsDiffer>
    <experiments>3</experiments>
</comment>
<comment type="interaction">
    <interactant intactId="EBI-3867333">
        <id>A8MQ03</id>
    </interactant>
    <interactant intactId="EBI-11998660">
        <id>Q9UHI7-3</id>
        <label>SLC23A1</label>
    </interactant>
    <organismsDiffer>false</organismsDiffer>
    <experiments>3</experiments>
</comment>
<comment type="interaction">
    <interactant intactId="EBI-3867333">
        <id>A8MQ03</id>
    </interactant>
    <interactant intactId="EBI-6269587">
        <id>Q9H1K4</id>
        <label>SLC25A18</label>
    </interactant>
    <organismsDiffer>false</organismsDiffer>
    <experiments>3</experiments>
</comment>
<comment type="interaction">
    <interactant intactId="EBI-3867333">
        <id>A8MQ03</id>
    </interactant>
    <interactant intactId="EBI-12065614">
        <id>Q6ZT89-3</id>
        <label>SLC25A48</label>
    </interactant>
    <organismsDiffer>false</organismsDiffer>
    <experiments>3</experiments>
</comment>
<comment type="interaction">
    <interactant intactId="EBI-3867333">
        <id>A8MQ03</id>
    </interactant>
    <interactant intactId="EBI-10265149">
        <id>Q8N370</id>
        <label>SLC43A2</label>
    </interactant>
    <organismsDiffer>false</organismsDiffer>
    <experiments>3</experiments>
</comment>
<comment type="interaction">
    <interactant intactId="EBI-3867333">
        <id>A8MQ03</id>
    </interactant>
    <interactant intactId="EBI-12313867">
        <id>Q92911</id>
        <label>SLC5A5</label>
    </interactant>
    <organismsDiffer>false</organismsDiffer>
    <experiments>3</experiments>
</comment>
<comment type="interaction">
    <interactant intactId="EBI-3867333">
        <id>A8MQ03</id>
    </interactant>
    <interactant intactId="EBI-10311198">
        <id>Q9NP91</id>
        <label>SLC6A20</label>
    </interactant>
    <organismsDiffer>false</organismsDiffer>
    <experiments>3</experiments>
</comment>
<comment type="interaction">
    <interactant intactId="EBI-3867333">
        <id>A8MQ03</id>
    </interactant>
    <interactant intactId="EBI-947791">
        <id>O75093</id>
        <label>SLIT1</label>
    </interactant>
    <organismsDiffer>false</organismsDiffer>
    <experiments>3</experiments>
</comment>
<comment type="interaction">
    <interactant intactId="EBI-3867333">
        <id>A8MQ03</id>
    </interactant>
    <interactant intactId="EBI-355653">
        <id>Q92922</id>
        <label>SMARCC1</label>
    </interactant>
    <organismsDiffer>false</organismsDiffer>
    <experiments>3</experiments>
</comment>
<comment type="interaction">
    <interactant intactId="EBI-3867333">
        <id>A8MQ03</id>
    </interactant>
    <interactant intactId="EBI-358489">
        <id>Q96GM5</id>
        <label>SMARCD1</label>
    </interactant>
    <organismsDiffer>false</organismsDiffer>
    <experiments>3</experiments>
</comment>
<comment type="interaction">
    <interactant intactId="EBI-3867333">
        <id>A8MQ03</id>
    </interactant>
    <interactant intactId="EBI-455078">
        <id>Q969G3</id>
        <label>SMARCE1</label>
    </interactant>
    <organismsDiffer>false</organismsDiffer>
    <experiments>3</experiments>
</comment>
<comment type="interaction">
    <interactant intactId="EBI-3867333">
        <id>A8MQ03</id>
    </interactant>
    <interactant intactId="EBI-750494">
        <id>P49901</id>
        <label>SMCP</label>
    </interactant>
    <organismsDiffer>false</organismsDiffer>
    <experiments>6</experiments>
</comment>
<comment type="interaction">
    <interactant intactId="EBI-3867333">
        <id>A8MQ03</id>
    </interactant>
    <interactant intactId="EBI-12162539">
        <id>Q9H4F8-2</id>
        <label>SMOC1</label>
    </interactant>
    <organismsDiffer>false</organismsDiffer>
    <experiments>3</experiments>
</comment>
<comment type="interaction">
    <interactant intactId="EBI-3867333">
        <id>A8MQ03</id>
    </interactant>
    <interactant intactId="EBI-12275818">
        <id>Q53HV7-2</id>
        <label>SMUG1</label>
    </interactant>
    <organismsDiffer>false</organismsDiffer>
    <experiments>3</experiments>
</comment>
<comment type="interaction">
    <interactant intactId="EBI-3867333">
        <id>A8MQ03</id>
    </interactant>
    <interactant intactId="EBI-372475">
        <id>P14678-2</id>
        <label>SNRPB</label>
    </interactant>
    <organismsDiffer>false</organismsDiffer>
    <experiments>3</experiments>
</comment>
<comment type="interaction">
    <interactant intactId="EBI-3867333">
        <id>A8MQ03</id>
    </interactant>
    <interactant intactId="EBI-766589">
        <id>P09234</id>
        <label>SNRPC</label>
    </interactant>
    <organismsDiffer>false</organismsDiffer>
    <experiments>3</experiments>
</comment>
<comment type="interaction">
    <interactant intactId="EBI-3867333">
        <id>A8MQ03</id>
    </interactant>
    <interactant intactId="EBI-298169">
        <id>Q96RF0</id>
        <label>SNX18</label>
    </interactant>
    <organismsDiffer>false</organismsDiffer>
    <experiments>3</experiments>
</comment>
<comment type="interaction">
    <interactant intactId="EBI-3867333">
        <id>A8MQ03</id>
    </interactant>
    <interactant intactId="EBI-14550815">
        <id>A1A5D2</id>
        <label>SNX26</label>
    </interactant>
    <organismsDiffer>false</organismsDiffer>
    <experiments>3</experiments>
</comment>
<comment type="interaction">
    <interactant intactId="EBI-3867333">
        <id>A8MQ03</id>
    </interactant>
    <interactant intactId="EBI-1539606">
        <id>O14512</id>
        <label>SOCS7</label>
    </interactant>
    <organismsDiffer>false</organismsDiffer>
    <experiments>3</experiments>
</comment>
<comment type="interaction">
    <interactant intactId="EBI-3867333">
        <id>A8MQ03</id>
    </interactant>
    <interactant intactId="EBI-12041693">
        <id>Q86W54-2</id>
        <label>SPATA24</label>
    </interactant>
    <organismsDiffer>false</organismsDiffer>
    <experiments>3</experiments>
</comment>
<comment type="interaction">
    <interactant intactId="EBI-3867333">
        <id>A8MQ03</id>
    </interactant>
    <interactant intactId="EBI-750105">
        <id>Q5T0L3</id>
        <label>SPATA46</label>
    </interactant>
    <organismsDiffer>false</organismsDiffer>
    <experiments>3</experiments>
</comment>
<comment type="interaction">
    <interactant intactId="EBI-3867333">
        <id>A8MQ03</id>
    </interactant>
    <interactant intactId="EBI-8635958">
        <id>Q6RVD6</id>
        <label>SPATA8</label>
    </interactant>
    <organismsDiffer>false</organismsDiffer>
    <experiments>3</experiments>
</comment>
<comment type="interaction">
    <interactant intactId="EBI-3867333">
        <id>A8MQ03</id>
    </interactant>
    <interactant intactId="EBI-12303571">
        <id>Q9Y4P9-2</id>
        <label>SPEF1</label>
    </interactant>
    <organismsDiffer>false</organismsDiffer>
    <experiments>3</experiments>
</comment>
<comment type="interaction">
    <interactant intactId="EBI-3867333">
        <id>A8MQ03</id>
    </interactant>
    <interactant intactId="EBI-717201">
        <id>Q9UQ90</id>
        <label>SPG7</label>
    </interactant>
    <organismsDiffer>false</organismsDiffer>
    <experiments>3</experiments>
</comment>
<comment type="interaction">
    <interactant intactId="EBI-3867333">
        <id>A8MQ03</id>
    </interactant>
    <interactant intactId="EBI-12020542">
        <id>Q96LM5</id>
        <label>SPMIP2</label>
    </interactant>
    <organismsDiffer>false</organismsDiffer>
    <experiments>3</experiments>
</comment>
<comment type="interaction">
    <interactant intactId="EBI-3867333">
        <id>A8MQ03</id>
    </interactant>
    <interactant intactId="EBI-10174456">
        <id>Q8N865</id>
        <label>SPMIP4</label>
    </interactant>
    <organismsDiffer>false</organismsDiffer>
    <experiments>3</experiments>
</comment>
<comment type="interaction">
    <interactant intactId="EBI-3867333">
        <id>A8MQ03</id>
    </interactant>
    <interactant intactId="EBI-10269322">
        <id>Q8NCR6</id>
        <label>SPMIP6</label>
    </interactant>
    <organismsDiffer>false</organismsDiffer>
    <experiments>3</experiments>
</comment>
<comment type="interaction">
    <interactant intactId="EBI-3867333">
        <id>A8MQ03</id>
    </interactant>
    <interactant intactId="EBI-743976">
        <id>Q96LM6</id>
        <label>SPMIP9</label>
    </interactant>
    <organismsDiffer>false</organismsDiffer>
    <experiments>3</experiments>
</comment>
<comment type="interaction">
    <interactant intactId="EBI-3867333">
        <id>A8MQ03</id>
    </interactant>
    <interactant intactId="EBI-2431846">
        <id>Q9HCB6</id>
        <label>SPON1</label>
    </interactant>
    <organismsDiffer>false</organismsDiffer>
    <experiments>3</experiments>
</comment>
<comment type="interaction">
    <interactant intactId="EBI-3867333">
        <id>A8MQ03</id>
    </interactant>
    <interactant intactId="EBI-14064968">
        <id>Q8IUH8</id>
        <label>SPPL2C</label>
    </interactant>
    <organismsDiffer>false</organismsDiffer>
    <experiments>3</experiments>
</comment>
<comment type="interaction">
    <interactant intactId="EBI-3867333">
        <id>A8MQ03</id>
    </interactant>
    <interactant intactId="EBI-3866665">
        <id>O43609</id>
        <label>SPRY1</label>
    </interactant>
    <organismsDiffer>false</organismsDiffer>
    <experiments>6</experiments>
</comment>
<comment type="interaction">
    <interactant intactId="EBI-3867333">
        <id>A8MQ03</id>
    </interactant>
    <interactant intactId="EBI-723396">
        <id>Q969W0</id>
        <label>SPTSSA</label>
    </interactant>
    <organismsDiffer>false</organismsDiffer>
    <experiments>3</experiments>
</comment>
<comment type="interaction">
    <interactant intactId="EBI-3867333">
        <id>A8MQ03</id>
    </interactant>
    <interactant intactId="EBI-13130472">
        <id>P31213</id>
        <label>SRD5A2</label>
    </interactant>
    <organismsDiffer>false</organismsDiffer>
    <experiments>3</experiments>
</comment>
<comment type="interaction">
    <interactant intactId="EBI-3867333">
        <id>A8MQ03</id>
    </interactant>
    <interactant intactId="EBI-749295">
        <id>O75716</id>
        <label>STK16</label>
    </interactant>
    <organismsDiffer>false</organismsDiffer>
    <experiments>3</experiments>
</comment>
<comment type="interaction">
    <interactant intactId="EBI-3867333">
        <id>A8MQ03</id>
    </interactant>
    <interactant intactId="EBI-12017416">
        <id>Q9BX59</id>
        <label>TAPBPL</label>
    </interactant>
    <organismsDiffer>false</organismsDiffer>
    <experiments>3</experiments>
</comment>
<comment type="interaction">
    <interactant intactId="EBI-3867333">
        <id>A8MQ03</id>
    </interactant>
    <interactant intactId="EBI-2853051">
        <id>Q13207</id>
        <label>TBX2</label>
    </interactant>
    <organismsDiffer>false</organismsDiffer>
    <experiments>3</experiments>
</comment>
<comment type="interaction">
    <interactant intactId="EBI-3867333">
        <id>A8MQ03</id>
    </interactant>
    <interactant intactId="EBI-2824328">
        <id>O95947</id>
        <label>TBX6</label>
    </interactant>
    <organismsDiffer>false</organismsDiffer>
    <experiments>3</experiments>
</comment>
<comment type="interaction">
    <interactant intactId="EBI-3867333">
        <id>A8MQ03</id>
    </interactant>
    <interactant intactId="EBI-11974855">
        <id>Q9Y4C2-2</id>
        <label>TCAF1</label>
    </interactant>
    <organismsDiffer>false</organismsDiffer>
    <experiments>3</experiments>
</comment>
<comment type="interaction">
    <interactant intactId="EBI-3867333">
        <id>A8MQ03</id>
    </interactant>
    <interactant intactId="EBI-710310">
        <id>Q15560</id>
        <label>TCEA2</label>
    </interactant>
    <organismsDiffer>false</organismsDiffer>
    <experiments>3</experiments>
</comment>
<comment type="interaction">
    <interactant intactId="EBI-3867333">
        <id>A8MQ03</id>
    </interactant>
    <interactant intactId="EBI-11955057">
        <id>Q8N8B7-2</id>
        <label>TCEANC</label>
    </interactant>
    <organismsDiffer>false</organismsDiffer>
    <experiments>3</experiments>
</comment>
<comment type="interaction">
    <interactant intactId="EBI-3867333">
        <id>A8MQ03</id>
    </interactant>
    <interactant intactId="EBI-11746252">
        <id>Q9NQB0-10</id>
        <label>TCF7L2</label>
    </interactant>
    <organismsDiffer>false</organismsDiffer>
    <experiments>3</experiments>
</comment>
<comment type="interaction">
    <interactant intactId="EBI-3867333">
        <id>A8MQ03</id>
    </interactant>
    <interactant intactId="EBI-752030">
        <id>Q96A09</id>
        <label>TENT5B</label>
    </interactant>
    <organismsDiffer>false</organismsDiffer>
    <experiments>3</experiments>
</comment>
<comment type="interaction">
    <interactant intactId="EBI-3867333">
        <id>A8MQ03</id>
    </interactant>
    <interactant intactId="EBI-11139477">
        <id>Q96N21</id>
        <label>TEPSIN</label>
    </interactant>
    <organismsDiffer>false</organismsDiffer>
    <experiments>3</experiments>
</comment>
<comment type="interaction">
    <interactant intactId="EBI-3867333">
        <id>A8MQ03</id>
    </interactant>
    <interactant intactId="EBI-11952651">
        <id>Q7Z6R9</id>
        <label>TFAP2D</label>
    </interactant>
    <organismsDiffer>false</organismsDiffer>
    <experiments>3</experiments>
</comment>
<comment type="interaction">
    <interactant intactId="EBI-3867333">
        <id>A8MQ03</id>
    </interactant>
    <interactant intactId="EBI-779636">
        <id>P01137</id>
        <label>TGFB1</label>
    </interactant>
    <organismsDiffer>false</organismsDiffer>
    <experiments>3</experiments>
</comment>
<comment type="interaction">
    <interactant intactId="EBI-3867333">
        <id>A8MQ03</id>
    </interactant>
    <interactant intactId="EBI-741350">
        <id>Q9BT49</id>
        <label>THAP7</label>
    </interactant>
    <organismsDiffer>false</organismsDiffer>
    <experiments>3</experiments>
</comment>
<comment type="interaction">
    <interactant intactId="EBI-3867333">
        <id>A8MQ03</id>
    </interactant>
    <interactant intactId="EBI-1200494">
        <id>Q9Y584</id>
        <label>TIMM22</label>
    </interactant>
    <organismsDiffer>false</organismsDiffer>
    <experiments>3</experiments>
</comment>
<comment type="interaction">
    <interactant intactId="EBI-3867333">
        <id>A8MQ03</id>
    </interactant>
    <interactant intactId="EBI-11741437">
        <id>Q08117-2</id>
        <label>TLE5</label>
    </interactant>
    <organismsDiffer>false</organismsDiffer>
    <experiments>3</experiments>
</comment>
<comment type="interaction">
    <interactant intactId="EBI-3867333">
        <id>A8MQ03</id>
    </interactant>
    <interactant intactId="EBI-2115348">
        <id>O76062</id>
        <label>TM7SF2</label>
    </interactant>
    <organismsDiffer>false</organismsDiffer>
    <experiments>3</experiments>
</comment>
<comment type="interaction">
    <interactant intactId="EBI-3867333">
        <id>A8MQ03</id>
    </interactant>
    <interactant intactId="EBI-10276729">
        <id>Q8WUU8</id>
        <label>TMEM174</label>
    </interactant>
    <organismsDiffer>false</organismsDiffer>
    <experiments>3</experiments>
</comment>
<comment type="interaction">
    <interactant intactId="EBI-3867333">
        <id>A8MQ03</id>
    </interactant>
    <interactant intactId="EBI-357849">
        <id>Q15025</id>
        <label>TNIP1</label>
    </interactant>
    <organismsDiffer>false</organismsDiffer>
    <experiments>3</experiments>
</comment>
<comment type="interaction">
    <interactant intactId="EBI-3867333">
        <id>A8MQ03</id>
    </interactant>
    <interactant intactId="EBI-2509913">
        <id>Q96KP6</id>
        <label>TNIP3</label>
    </interactant>
    <organismsDiffer>false</organismsDiffer>
    <experiments>3</experiments>
</comment>
<comment type="interaction">
    <interactant intactId="EBI-3867333">
        <id>A8MQ03</id>
    </interactant>
    <interactant intactId="EBI-11994780">
        <id>Q07912-2</id>
        <label>TNK2</label>
    </interactant>
    <organismsDiffer>false</organismsDiffer>
    <experiments>3</experiments>
</comment>
<comment type="interaction">
    <interactant intactId="EBI-3867333">
        <id>A8MQ03</id>
    </interactant>
    <interactant intactId="EBI-7543499">
        <id>Q8IZW8</id>
        <label>TNS4</label>
    </interactant>
    <organismsDiffer>false</organismsDiffer>
    <experiments>3</experiments>
</comment>
<comment type="interaction">
    <interactant intactId="EBI-3867333">
        <id>A8MQ03</id>
    </interactant>
    <interactant intactId="EBI-719893">
        <id>Q8WVR3</id>
        <label>TRAPPC14</label>
    </interactant>
    <organismsDiffer>false</organismsDiffer>
    <experiments>3</experiments>
</comment>
<comment type="interaction">
    <interactant intactId="EBI-3867333">
        <id>A8MQ03</id>
    </interactant>
    <interactant intactId="EBI-16746122">
        <id>Q9NSU2-1</id>
        <label>TREX1</label>
    </interactant>
    <organismsDiffer>false</organismsDiffer>
    <experiments>3</experiments>
</comment>
<comment type="interaction">
    <interactant intactId="EBI-3867333">
        <id>A8MQ03</id>
    </interactant>
    <interactant intactId="EBI-5235829">
        <id>Q8IWZ5</id>
        <label>TRIM42</label>
    </interactant>
    <organismsDiffer>false</organismsDiffer>
    <experiments>3</experiments>
</comment>
<comment type="interaction">
    <interactant intactId="EBI-3867333">
        <id>A8MQ03</id>
    </interactant>
    <interactant intactId="EBI-10241197">
        <id>Q3SY00</id>
        <label>TSGA10IP</label>
    </interactant>
    <organismsDiffer>false</organismsDiffer>
    <experiments>3</experiments>
</comment>
<comment type="interaction">
    <interactant intactId="EBI-3867333">
        <id>A8MQ03</id>
    </interactant>
    <interactant intactId="EBI-8652667">
        <id>O14817</id>
        <label>TSPAN4</label>
    </interactant>
    <organismsDiffer>false</organismsDiffer>
    <experiments>6</experiments>
</comment>
<comment type="interaction">
    <interactant intactId="EBI-3867333">
        <id>A8MQ03</id>
    </interactant>
    <interactant intactId="EBI-9090990">
        <id>Q5W5X9-3</id>
        <label>TTC23</label>
    </interactant>
    <organismsDiffer>false</organismsDiffer>
    <experiments>3</experiments>
</comment>
<comment type="interaction">
    <interactant intactId="EBI-3867333">
        <id>A8MQ03</id>
    </interactant>
    <interactant intactId="EBI-10210710">
        <id>P49638</id>
        <label>TTPA</label>
    </interactant>
    <organismsDiffer>false</organismsDiffer>
    <experiments>3</experiments>
</comment>
<comment type="interaction">
    <interactant intactId="EBI-3867333">
        <id>A8MQ03</id>
    </interactant>
    <interactant intactId="EBI-1383454">
        <id>P29597</id>
        <label>TYK2</label>
    </interactant>
    <organismsDiffer>false</organismsDiffer>
    <experiments>3</experiments>
</comment>
<comment type="interaction">
    <interactant intactId="EBI-3867333">
        <id>A8MQ03</id>
    </interactant>
    <interactant intactId="EBI-1993627">
        <id>O94888</id>
        <label>UBXN7</label>
    </interactant>
    <organismsDiffer>false</organismsDiffer>
    <experiments>3</experiments>
</comment>
<comment type="interaction">
    <interactant intactId="EBI-3867333">
        <id>A8MQ03</id>
    </interactant>
    <interactant intactId="EBI-12238241">
        <id>Q8IV45</id>
        <label>UNC5CL</label>
    </interactant>
    <organismsDiffer>false</organismsDiffer>
    <experiments>3</experiments>
</comment>
<comment type="interaction">
    <interactant intactId="EBI-3867333">
        <id>A8MQ03</id>
    </interactant>
    <interactant intactId="EBI-11975223">
        <id>Q70EL1-9</id>
        <label>USP54</label>
    </interactant>
    <organismsDiffer>false</organismsDiffer>
    <experiments>3</experiments>
</comment>
<comment type="interaction">
    <interactant intactId="EBI-3867333">
        <id>A8MQ03</id>
    </interactant>
    <interactant intactId="EBI-5457544">
        <id>Q9BRU9</id>
        <label>UTP23</label>
    </interactant>
    <organismsDiffer>false</organismsDiffer>
    <experiments>3</experiments>
</comment>
<comment type="interaction">
    <interactant intactId="EBI-3867333">
        <id>A8MQ03</id>
    </interactant>
    <interactant intactId="EBI-10249550">
        <id>Q6EMK4</id>
        <label>VASN</label>
    </interactant>
    <organismsDiffer>false</organismsDiffer>
    <experiments>6</experiments>
</comment>
<comment type="interaction">
    <interactant intactId="EBI-3867333">
        <id>A8MQ03</id>
    </interactant>
    <interactant intactId="EBI-10191303">
        <id>O95231</id>
        <label>VENTX</label>
    </interactant>
    <organismsDiffer>false</organismsDiffer>
    <experiments>3</experiments>
</comment>
<comment type="interaction">
    <interactant intactId="EBI-3867333">
        <id>A8MQ03</id>
    </interactant>
    <interactant intactId="EBI-11957216">
        <id>A8MV65-2</id>
        <label>VGLL3</label>
    </interactant>
    <organismsDiffer>false</organismsDiffer>
    <experiments>3</experiments>
</comment>
<comment type="interaction">
    <interactant intactId="EBI-3867333">
        <id>A8MQ03</id>
    </interactant>
    <interactant intactId="EBI-4311759">
        <id>Q8IW00</id>
        <label>VSTM4</label>
    </interactant>
    <organismsDiffer>false</organismsDiffer>
    <experiments>3</experiments>
</comment>
<comment type="interaction">
    <interactant intactId="EBI-3867333">
        <id>A8MQ03</id>
    </interactant>
    <interactant intactId="EBI-11957238">
        <id>Q2TAL6</id>
        <label>VWC2</label>
    </interactant>
    <organismsDiffer>false</organismsDiffer>
    <experiments>3</experiments>
</comment>
<comment type="interaction">
    <interactant intactId="EBI-3867333">
        <id>A8MQ03</id>
    </interactant>
    <interactant intactId="EBI-11747707">
        <id>B2RUY7</id>
        <label>VWC2L</label>
    </interactant>
    <organismsDiffer>false</organismsDiffer>
    <experiments>3</experiments>
</comment>
<comment type="interaction">
    <interactant intactId="EBI-3867333">
        <id>A8MQ03</id>
    </interactant>
    <interactant intactId="EBI-12032042">
        <id>Q64LD2-2</id>
        <label>WDR25</label>
    </interactant>
    <organismsDiffer>false</organismsDiffer>
    <experiments>4</experiments>
</comment>
<comment type="interaction">
    <interactant intactId="EBI-3867333">
        <id>A8MQ03</id>
    </interactant>
    <interactant intactId="EBI-3922719">
        <id>Q9Y5W5</id>
        <label>WIF1</label>
    </interactant>
    <organismsDiffer>false</organismsDiffer>
    <experiments>3</experiments>
</comment>
<comment type="interaction">
    <interactant intactId="EBI-3867333">
        <id>A8MQ03</id>
    </interactant>
    <interactant intactId="EBI-8058160">
        <id>O96014</id>
        <label>WNT11</label>
    </interactant>
    <organismsDiffer>false</organismsDiffer>
    <experiments>3</experiments>
</comment>
<comment type="interaction">
    <interactant intactId="EBI-3867333">
        <id>A8MQ03</id>
    </interactant>
    <interactant intactId="EBI-11745701">
        <id>P19544-6</id>
        <label>WT1</label>
    </interactant>
    <organismsDiffer>false</organismsDiffer>
    <experiments>3</experiments>
</comment>
<comment type="interaction">
    <interactant intactId="EBI-3867333">
        <id>A8MQ03</id>
    </interactant>
    <interactant intactId="EBI-515331">
        <id>P07947</id>
        <label>YES1</label>
    </interactant>
    <organismsDiffer>false</organismsDiffer>
    <experiments>3</experiments>
</comment>
<comment type="interaction">
    <interactant intactId="EBI-3867333">
        <id>A8MQ03</id>
    </interactant>
    <interactant intactId="EBI-765538">
        <id>P25490</id>
        <label>YY1</label>
    </interactant>
    <organismsDiffer>false</organismsDiffer>
    <experiments>3</experiments>
</comment>
<comment type="interaction">
    <interactant intactId="EBI-3867333">
        <id>A8MQ03</id>
    </interactant>
    <interactant intactId="EBI-739899">
        <id>P24278</id>
        <label>ZBTB25</label>
    </interactant>
    <organismsDiffer>false</organismsDiffer>
    <experiments>3</experiments>
</comment>
<comment type="interaction">
    <interactant intactId="EBI-3867333">
        <id>A8MQ03</id>
    </interactant>
    <interactant intactId="EBI-2564133">
        <id>Q9P1Z0</id>
        <label>ZBTB4</label>
    </interactant>
    <organismsDiffer>false</organismsDiffer>
    <experiments>3</experiments>
</comment>
<comment type="interaction">
    <interactant intactId="EBI-3867333">
        <id>A8MQ03</id>
    </interactant>
    <interactant intactId="EBI-3937908">
        <id>Q8WYQ9</id>
        <label>ZCCHC14</label>
    </interactant>
    <organismsDiffer>false</organismsDiffer>
    <experiments>3</experiments>
</comment>
<comment type="interaction">
    <interactant intactId="EBI-3867333">
        <id>A8MQ03</id>
    </interactant>
    <interactant intactId="EBI-2818796">
        <id>Q8WTX9</id>
        <label>ZDHHC1</label>
    </interactant>
    <organismsDiffer>false</organismsDiffer>
    <experiments>3</experiments>
</comment>
<comment type="interaction">
    <interactant intactId="EBI-3867333">
        <id>A8MQ03</id>
    </interactant>
    <interactant intactId="EBI-11994144">
        <id>A2RRC6</id>
        <label>ZFHX2</label>
    </interactant>
    <organismsDiffer>false</organismsDiffer>
    <experiments>3</experiments>
</comment>
<comment type="interaction">
    <interactant intactId="EBI-3867333">
        <id>A8MQ03</id>
    </interactant>
    <interactant intactId="EBI-11963196">
        <id>Q15915</id>
        <label>ZIC1</label>
    </interactant>
    <organismsDiffer>false</organismsDiffer>
    <experiments>3</experiments>
</comment>
<comment type="interaction">
    <interactant intactId="EBI-3867333">
        <id>A8MQ03</id>
    </interactant>
    <interactant intactId="EBI-747061">
        <id>O75800</id>
        <label>ZMYND10</label>
    </interactant>
    <organismsDiffer>false</organismsDiffer>
    <experiments>3</experiments>
</comment>
<comment type="interaction">
    <interactant intactId="EBI-3867333">
        <id>A8MQ03</id>
    </interactant>
    <interactant intactId="EBI-2555767">
        <id>Q15973</id>
        <label>ZNF124</label>
    </interactant>
    <organismsDiffer>false</organismsDiffer>
    <experiments>3</experiments>
</comment>
<comment type="interaction">
    <interactant intactId="EBI-3867333">
        <id>A8MQ03</id>
    </interactant>
    <interactant intactId="EBI-741694">
        <id>P49910</id>
        <label>ZNF165</label>
    </interactant>
    <organismsDiffer>false</organismsDiffer>
    <experiments>3</experiments>
</comment>
<comment type="interaction">
    <interactant intactId="EBI-3867333">
        <id>A8MQ03</id>
    </interactant>
    <interactant intactId="EBI-7115319">
        <id>Q14584</id>
        <label>ZNF266</label>
    </interactant>
    <organismsDiffer>false</organismsDiffer>
    <experiments>3</experiments>
</comment>
<comment type="interaction">
    <interactant intactId="EBI-3867333">
        <id>A8MQ03</id>
    </interactant>
    <interactant intactId="EBI-11993110">
        <id>Q9P2F9</id>
        <label>ZNF319</label>
    </interactant>
    <organismsDiffer>false</organismsDiffer>
    <experiments>3</experiments>
</comment>
<comment type="interaction">
    <interactant intactId="EBI-3867333">
        <id>A8MQ03</id>
    </interactant>
    <interactant intactId="EBI-373456">
        <id>Q9Y3S2</id>
        <label>ZNF330</label>
    </interactant>
    <organismsDiffer>false</organismsDiffer>
    <experiments>3</experiments>
</comment>
<comment type="interaction">
    <interactant intactId="EBI-3867333">
        <id>A8MQ03</id>
    </interactant>
    <interactant intactId="EBI-347633">
        <id>Q9H9D4</id>
        <label>ZNF408</label>
    </interactant>
    <organismsDiffer>false</organismsDiffer>
    <experiments>3</experiments>
</comment>
<comment type="interaction">
    <interactant intactId="EBI-3867333">
        <id>A8MQ03</id>
    </interactant>
    <interactant intactId="EBI-744257">
        <id>Q96IQ9</id>
        <label>ZNF414</label>
    </interactant>
    <organismsDiffer>false</organismsDiffer>
    <experiments>3</experiments>
</comment>
<comment type="interaction">
    <interactant intactId="EBI-3867333">
        <id>A8MQ03</id>
    </interactant>
    <interactant intactId="EBI-740727">
        <id>Q8TAU3</id>
        <label>ZNF417</label>
    </interactant>
    <organismsDiffer>false</organismsDiffer>
    <experiments>5</experiments>
</comment>
<comment type="interaction">
    <interactant intactId="EBI-3867333">
        <id>A8MQ03</id>
    </interactant>
    <interactant intactId="EBI-10288482">
        <id>Q96HQ0</id>
        <label>ZNF419</label>
    </interactant>
    <organismsDiffer>false</organismsDiffer>
    <experiments>3</experiments>
</comment>
<comment type="interaction">
    <interactant intactId="EBI-3867333">
        <id>A8MQ03</id>
    </interactant>
    <interactant intactId="EBI-11962468">
        <id>Q7Z4V0</id>
        <label>ZNF438</label>
    </interactant>
    <organismsDiffer>false</organismsDiffer>
    <experiments>3</experiments>
</comment>
<comment type="interaction">
    <interactant intactId="EBI-3867333">
        <id>A8MQ03</id>
    </interactant>
    <interactant intactId="EBI-747580">
        <id>Q8NDP4</id>
        <label>ZNF439</label>
    </interactant>
    <organismsDiffer>false</organismsDiffer>
    <experiments>3</experiments>
</comment>
<comment type="interaction">
    <interactant intactId="EBI-3867333">
        <id>A8MQ03</id>
    </interactant>
    <interactant intactId="EBI-726439">
        <id>Q8IYI8</id>
        <label>ZNF440</label>
    </interactant>
    <organismsDiffer>false</organismsDiffer>
    <experiments>3</experiments>
</comment>
<comment type="interaction">
    <interactant intactId="EBI-3867333">
        <id>A8MQ03</id>
    </interactant>
    <interactant intactId="EBI-17216366">
        <id>Q8N8Z8</id>
        <label>ZNF441</label>
    </interactant>
    <organismsDiffer>false</organismsDiffer>
    <experiments>3</experiments>
</comment>
<comment type="interaction">
    <interactant intactId="EBI-3867333">
        <id>A8MQ03</id>
    </interactant>
    <interactant intactId="EBI-740232">
        <id>Q9NWS9-2</id>
        <label>ZNF446</label>
    </interactant>
    <organismsDiffer>false</organismsDiffer>
    <experiments>3</experiments>
</comment>
<comment type="interaction">
    <interactant intactId="EBI-3867333">
        <id>A8MQ03</id>
    </interactant>
    <interactant intactId="EBI-10486136">
        <id>Q6ZNH5</id>
        <label>ZNF497</label>
    </interactant>
    <organismsDiffer>false</organismsDiffer>
    <experiments>3</experiments>
</comment>
<comment type="interaction">
    <interactant intactId="EBI-3867333">
        <id>A8MQ03</id>
    </interactant>
    <interactant intactId="EBI-2555731">
        <id>Q9H707</id>
        <label>ZNF552</label>
    </interactant>
    <organismsDiffer>false</organismsDiffer>
    <experiments>3</experiments>
</comment>
<comment type="interaction">
    <interactant intactId="EBI-3867333">
        <id>A8MQ03</id>
    </interactant>
    <interactant intactId="EBI-14069183">
        <id>Q86XF7</id>
        <label>ZNF575</label>
    </interactant>
    <organismsDiffer>false</organismsDiffer>
    <experiments>3</experiments>
</comment>
<comment type="interaction">
    <interactant intactId="EBI-3867333">
        <id>A8MQ03</id>
    </interactant>
    <interactant intactId="EBI-746277">
        <id>Q9UK33</id>
        <label>ZNF580</label>
    </interactant>
    <organismsDiffer>false</organismsDiffer>
    <experiments>3</experiments>
</comment>
<comment type="interaction">
    <interactant intactId="EBI-3867333">
        <id>A8MQ03</id>
    </interactant>
    <interactant intactId="EBI-745520">
        <id>Q9P0T4</id>
        <label>ZNF581</label>
    </interactant>
    <organismsDiffer>false</organismsDiffer>
    <experiments>6</experiments>
</comment>
<comment type="interaction">
    <interactant intactId="EBI-3867333">
        <id>A8MQ03</id>
    </interactant>
    <interactant intactId="EBI-6427977">
        <id>Q96SQ5</id>
        <label>ZNF587</label>
    </interactant>
    <organismsDiffer>false</organismsDiffer>
    <experiments>3</experiments>
</comment>
<comment type="interaction">
    <interactant intactId="EBI-3867333">
        <id>A8MQ03</id>
    </interactant>
    <interactant intactId="EBI-11985915">
        <id>Q5T619</id>
        <label>ZNF648</label>
    </interactant>
    <organismsDiffer>false</organismsDiffer>
    <experiments>3</experiments>
</comment>
<comment type="interaction">
    <interactant intactId="EBI-3867333">
        <id>A8MQ03</id>
    </interactant>
    <interactant intactId="EBI-12006574">
        <id>Q96BR6</id>
        <label>ZNF669</label>
    </interactant>
    <organismsDiffer>false</organismsDiffer>
    <experiments>3</experiments>
</comment>
<comment type="interaction">
    <interactant intactId="EBI-3867333">
        <id>A8MQ03</id>
    </interactant>
    <interactant intactId="EBI-12005952">
        <id>Q8IZ20</id>
        <label>ZNF683</label>
    </interactant>
    <organismsDiffer>false</organismsDiffer>
    <experiments>3</experiments>
</comment>
<comment type="interaction">
    <interactant intactId="EBI-3867333">
        <id>A8MQ03</id>
    </interactant>
    <interactant intactId="EBI-11090299">
        <id>Q9H7X3</id>
        <label>ZNF696</label>
    </interactant>
    <organismsDiffer>false</organismsDiffer>
    <experiments>3</experiments>
</comment>
<comment type="interaction">
    <interactant intactId="EBI-3867333">
        <id>A8MQ03</id>
    </interactant>
    <interactant intactId="EBI-745775">
        <id>Q96H86</id>
        <label>ZNF764</label>
    </interactant>
    <organismsDiffer>false</organismsDiffer>
    <experiments>3</experiments>
</comment>
<comment type="interaction">
    <interactant intactId="EBI-3867333">
        <id>A8MQ03</id>
    </interactant>
    <interactant intactId="EBI-7149881">
        <id>Q96BV0</id>
        <label>ZNF775</label>
    </interactant>
    <organismsDiffer>false</organismsDiffer>
    <experiments>3</experiments>
</comment>
<comment type="interaction">
    <interactant intactId="EBI-3867333">
        <id>A8MQ03</id>
    </interactant>
    <interactant intactId="EBI-10265203">
        <id>Q8N393</id>
        <label>ZNF786</label>
    </interactant>
    <organismsDiffer>false</organismsDiffer>
    <experiments>4</experiments>
</comment>
<comment type="interaction">
    <interactant intactId="EBI-3867333">
        <id>A8MQ03</id>
    </interactant>
    <interactant intactId="EBI-5667516">
        <id>Q9Y2P0</id>
        <label>ZNF835</label>
    </interactant>
    <organismsDiffer>false</organismsDiffer>
    <experiments>3</experiments>
</comment>
<comment type="interaction">
    <interactant intactId="EBI-3867333">
        <id>A8MQ03</id>
    </interactant>
    <interactant intactId="EBI-11962574">
        <id>Q96EG3</id>
        <label>ZNF837</label>
    </interactant>
    <organismsDiffer>false</organismsDiffer>
    <experiments>3</experiments>
</comment>
<comment type="interaction">
    <interactant intactId="EBI-3867333">
        <id>A8MQ03</id>
    </interactant>
    <interactant intactId="EBI-6428016">
        <id>Q8N446</id>
        <label>ZNF843</label>
    </interactant>
    <organismsDiffer>false</organismsDiffer>
    <experiments>3</experiments>
</comment>
<comment type="interaction">
    <interactant intactId="EBI-3867333">
        <id>A8MQ03</id>
    </interactant>
    <interactant intactId="EBI-347522">
        <id>O43257</id>
        <label>ZNHIT1</label>
    </interactant>
    <organismsDiffer>false</organismsDiffer>
    <experiments>3</experiments>
</comment>
<comment type="interaction">
    <interactant intactId="EBI-3867333">
        <id>A8MQ03</id>
    </interactant>
    <interactant intactId="EBI-8836980">
        <id>Q9BUG6</id>
        <label>ZSCAN5A</label>
    </interactant>
    <organismsDiffer>false</organismsDiffer>
    <experiments>3</experiments>
</comment>
<comment type="interaction">
    <interactant intactId="EBI-3867333">
        <id>A8MQ03</id>
    </interactant>
    <interactant intactId="EBI-750454">
        <id>Q96EJ4</id>
    </interactant>
    <organismsDiffer>false</organismsDiffer>
    <experiments>3</experiments>
</comment>
<comment type="subcellular location">
    <subcellularLocation>
        <location evidence="2">Cornified envelope</location>
    </subcellularLocation>
</comment>
<comment type="tissue specificity">
    <text evidence="2">Expressed in the stratum granulosum, in skin and oral epithelia (at protein level).</text>
</comment>
<comment type="similarity">
    <text evidence="3">Belongs to the CYSRT1 family.</text>
</comment>
<evidence type="ECO:0000256" key="1">
    <source>
        <dbReference type="SAM" id="MobiDB-lite"/>
    </source>
</evidence>
<evidence type="ECO:0000269" key="2">
    <source>
    </source>
</evidence>
<evidence type="ECO:0000305" key="3"/>
<dbReference type="EMBL" id="BX255925">
    <property type="status" value="NOT_ANNOTATED_CDS"/>
    <property type="molecule type" value="Genomic_DNA"/>
</dbReference>
<dbReference type="EMBL" id="BC052297">
    <property type="protein sequence ID" value="AAH52297.1"/>
    <property type="molecule type" value="mRNA"/>
</dbReference>
<dbReference type="CCDS" id="CCDS48064.3"/>
<dbReference type="RefSeq" id="NP_945352.4">
    <property type="nucleotide sequence ID" value="NM_199001.5"/>
</dbReference>
<dbReference type="BioGRID" id="132001">
    <property type="interactions" value="511"/>
</dbReference>
<dbReference type="FunCoup" id="A8MQ03">
    <property type="interactions" value="62"/>
</dbReference>
<dbReference type="IntAct" id="A8MQ03">
    <property type="interactions" value="501"/>
</dbReference>
<dbReference type="STRING" id="9606.ENSP00000386453"/>
<dbReference type="iPTMnet" id="A8MQ03"/>
<dbReference type="PhosphoSitePlus" id="A8MQ03"/>
<dbReference type="SwissPalm" id="A8MQ03"/>
<dbReference type="BioMuta" id="CYSRT1"/>
<dbReference type="jPOST" id="A8MQ03"/>
<dbReference type="MassIVE" id="A8MQ03"/>
<dbReference type="PaxDb" id="9606-ENSP00000386453"/>
<dbReference type="PeptideAtlas" id="A8MQ03"/>
<dbReference type="ProteomicsDB" id="1929"/>
<dbReference type="Pumba" id="A8MQ03"/>
<dbReference type="Antibodypedia" id="8700">
    <property type="antibodies" value="54 antibodies from 8 providers"/>
</dbReference>
<dbReference type="DNASU" id="375791"/>
<dbReference type="Ensembl" id="ENST00000650725.2">
    <property type="protein sequence ID" value="ENSP00000498316.1"/>
    <property type="gene ID" value="ENSG00000197191.7"/>
</dbReference>
<dbReference type="GeneID" id="375791"/>
<dbReference type="KEGG" id="hsa:375791"/>
<dbReference type="MANE-Select" id="ENST00000650725.2">
    <property type="protein sequence ID" value="ENSP00000498316.1"/>
    <property type="RefSeq nucleotide sequence ID" value="NM_199001.5"/>
    <property type="RefSeq protein sequence ID" value="NP_945352.4"/>
</dbReference>
<dbReference type="AGR" id="HGNC:30529"/>
<dbReference type="CTD" id="375791"/>
<dbReference type="DisGeNET" id="375791"/>
<dbReference type="GeneCards" id="CYSRT1"/>
<dbReference type="HGNC" id="HGNC:30529">
    <property type="gene designation" value="CYSRT1"/>
</dbReference>
<dbReference type="HPA" id="ENSG00000197191">
    <property type="expression patterns" value="Tissue enriched (esophagus)"/>
</dbReference>
<dbReference type="neXtProt" id="NX_A8MQ03"/>
<dbReference type="OpenTargets" id="ENSG00000197191"/>
<dbReference type="PharmGKB" id="PA162380848"/>
<dbReference type="VEuPathDB" id="HostDB:ENSG00000197191"/>
<dbReference type="eggNOG" id="ENOG502SD8F">
    <property type="taxonomic scope" value="Eukaryota"/>
</dbReference>
<dbReference type="GeneTree" id="ENSGT00390000003233"/>
<dbReference type="InParanoid" id="A8MQ03"/>
<dbReference type="OrthoDB" id="9836806at2759"/>
<dbReference type="PAN-GO" id="A8MQ03">
    <property type="GO annotations" value="0 GO annotations based on evolutionary models"/>
</dbReference>
<dbReference type="PhylomeDB" id="A8MQ03"/>
<dbReference type="TreeFam" id="TF338434"/>
<dbReference type="PathwayCommons" id="A8MQ03"/>
<dbReference type="SignaLink" id="A8MQ03"/>
<dbReference type="BioGRID-ORCS" id="375791">
    <property type="hits" value="8 hits in 759 CRISPR screens"/>
</dbReference>
<dbReference type="ChiTaRS" id="CYSRT1">
    <property type="organism name" value="human"/>
</dbReference>
<dbReference type="GenomeRNAi" id="375791"/>
<dbReference type="Pharos" id="A8MQ03">
    <property type="development level" value="Tdark"/>
</dbReference>
<dbReference type="PRO" id="PR:A8MQ03"/>
<dbReference type="Proteomes" id="UP000005640">
    <property type="component" value="Chromosome 9"/>
</dbReference>
<dbReference type="RNAct" id="A8MQ03">
    <property type="molecule type" value="protein"/>
</dbReference>
<dbReference type="Bgee" id="ENSG00000197191">
    <property type="expression patterns" value="Expressed in lower esophagus mucosa and 106 other cell types or tissues"/>
</dbReference>
<dbReference type="ExpressionAtlas" id="A8MQ03">
    <property type="expression patterns" value="baseline and differential"/>
</dbReference>
<dbReference type="GO" id="GO:0001533">
    <property type="term" value="C:cornified envelope"/>
    <property type="evidence" value="ECO:0000314"/>
    <property type="project" value="UniProtKB"/>
</dbReference>
<dbReference type="GO" id="GO:0070062">
    <property type="term" value="C:extracellular exosome"/>
    <property type="evidence" value="ECO:0007005"/>
    <property type="project" value="UniProtKB"/>
</dbReference>
<dbReference type="GO" id="GO:0042802">
    <property type="term" value="F:identical protein binding"/>
    <property type="evidence" value="ECO:0000353"/>
    <property type="project" value="IntAct"/>
</dbReference>
<dbReference type="GO" id="GO:0051702">
    <property type="term" value="P:biological process involved in interaction with symbiont"/>
    <property type="evidence" value="ECO:0000314"/>
    <property type="project" value="UniProtKB"/>
</dbReference>
<dbReference type="GO" id="GO:0061436">
    <property type="term" value="P:establishment of skin barrier"/>
    <property type="evidence" value="ECO:0000314"/>
    <property type="project" value="UniProtKB"/>
</dbReference>
<dbReference type="InterPro" id="IPR018904">
    <property type="entry name" value="UPF0574"/>
</dbReference>
<dbReference type="PANTHER" id="PTHR37879">
    <property type="entry name" value="CYSTEINE-RICH TAIL PROTEIN 1"/>
    <property type="match status" value="1"/>
</dbReference>
<dbReference type="PANTHER" id="PTHR37879:SF1">
    <property type="entry name" value="CYSTEINE-RICH TAIL PROTEIN 1"/>
    <property type="match status" value="1"/>
</dbReference>
<dbReference type="Pfam" id="PF10631">
    <property type="entry name" value="DUF2477"/>
    <property type="match status" value="1"/>
</dbReference>
<feature type="chain" id="PRO_0000332287" description="Cysteine-rich tail protein 1">
    <location>
        <begin position="1"/>
        <end position="144"/>
    </location>
</feature>
<feature type="region of interest" description="Disordered" evidence="1">
    <location>
        <begin position="51"/>
        <end position="105"/>
    </location>
</feature>
<feature type="compositionally biased region" description="Polar residues" evidence="1">
    <location>
        <begin position="78"/>
        <end position="98"/>
    </location>
</feature>
<feature type="sequence conflict" description="In Ref. 2; AAH52297." evidence="3" ref="2">
    <original>A</original>
    <variation>V</variation>
    <location>
        <position position="108"/>
    </location>
</feature>
<keyword id="KW-1267">Proteomics identification</keyword>
<keyword id="KW-1185">Reference proteome</keyword>
<sequence length="144" mass="15313">MDPQEMVVKNPYAHISIPRAHLRPDLGQQLEVASTCSSSSEMQPLPVGPCAPEPTHLLQPTEVPGPKGAKGNQGAAPIQNQQAWQQPGNPYSSSQRQAGLTYAGPPPAGRGDDIAHHCCCCPCCHCCHCPPFCRCHSCCCCVIS</sequence>
<accession>A8MQ03</accession>
<accession>Q86UY7</accession>
<protein>
    <recommendedName>
        <fullName>Cysteine-rich tail protein 1</fullName>
    </recommendedName>
</protein>